<comment type="function">
    <text evidence="2 7 9 11 13 14 15 17 18 19 22 23 24 25 26 28 29">Stress-activated, pro-apoptotic kinase which, following caspase-cleavage, enters the nucleus and induces chromatin condensation followed by internucleosomal DNA fragmentation (PubMed:11278283, PubMed:8566796, PubMed:8816758). Key component of the Hippo signaling pathway which plays a pivotal role in organ size control and tumor suppression by restricting proliferation and promoting apoptosis. The core of this pathway is composed of a kinase cascade wherein STK3/MST2 and STK4/MST1, in complex with its regulatory protein SAV1, phosphorylates and activates LATS1/2 in complex with its regulatory protein MOB1, which in turn phosphorylates and inactivates YAP1 oncoprotein and WWTR1/TAZ (PubMed:15688006, PubMed:16930133, PubMed:23972470, PubMed:28087714, PubMed:29063833, PubMed:30622739). Phosphorylation of YAP1 by LATS2 inhibits its translocation into the nucleus to regulate cellular genes important for cell proliferation, cell death, and cell migration (PubMed:15688006, PubMed:16930133, PubMed:23972470, PubMed:28087714). STK3/MST2 and STK4/MST1 are required to repress proliferation of mature hepatocytes, to prevent activation of facultative adult liver stem cells (oval cells), and to inhibit tumor formation. Phosphorylates NKX2-1 (By similarity). Phosphorylates NEK2 and plays a role in centrosome disjunction by regulating the localization of NEK2 to centrosome, and its ability to phosphorylate CROCC and CEP250 (PubMed:21076410, PubMed:21723128). In conjunction with SAV1, activates the transcriptional activity of ESR1 through the modulation of its phosphorylation (PubMed:21104395). Positively regulates RAF1 activation via suppression of the inhibitory phosphorylation of RAF1 on 'Ser-259' (PubMed:20212043). Phosphorylates MOBKL1A and RASSF2 (PubMed:19525978). Phosphorylates MOBKL1B on 'Thr-74'. Acts cooperatively with MOBKL1B to activate STK38 (PubMed:18328708, PubMed:18362890).</text>
</comment>
<comment type="catalytic activity">
    <reaction evidence="9">
        <text>L-seryl-[protein] + ATP = O-phospho-L-seryl-[protein] + ADP + H(+)</text>
        <dbReference type="Rhea" id="RHEA:17989"/>
        <dbReference type="Rhea" id="RHEA-COMP:9863"/>
        <dbReference type="Rhea" id="RHEA-COMP:11604"/>
        <dbReference type="ChEBI" id="CHEBI:15378"/>
        <dbReference type="ChEBI" id="CHEBI:29999"/>
        <dbReference type="ChEBI" id="CHEBI:30616"/>
        <dbReference type="ChEBI" id="CHEBI:83421"/>
        <dbReference type="ChEBI" id="CHEBI:456216"/>
        <dbReference type="EC" id="2.7.11.1"/>
    </reaction>
    <physiologicalReaction direction="left-to-right" evidence="9">
        <dbReference type="Rhea" id="RHEA:17990"/>
    </physiologicalReaction>
</comment>
<comment type="catalytic activity">
    <reaction evidence="9 25">
        <text>L-threonyl-[protein] + ATP = O-phospho-L-threonyl-[protein] + ADP + H(+)</text>
        <dbReference type="Rhea" id="RHEA:46608"/>
        <dbReference type="Rhea" id="RHEA-COMP:11060"/>
        <dbReference type="Rhea" id="RHEA-COMP:11605"/>
        <dbReference type="ChEBI" id="CHEBI:15378"/>
        <dbReference type="ChEBI" id="CHEBI:30013"/>
        <dbReference type="ChEBI" id="CHEBI:30616"/>
        <dbReference type="ChEBI" id="CHEBI:61977"/>
        <dbReference type="ChEBI" id="CHEBI:456216"/>
        <dbReference type="EC" id="2.7.11.1"/>
    </reaction>
    <physiologicalReaction direction="left-to-right" evidence="9 25">
        <dbReference type="Rhea" id="RHEA:46609"/>
    </physiologicalReaction>
</comment>
<comment type="cofactor">
    <cofactor evidence="25">
        <name>Mg(2+)</name>
        <dbReference type="ChEBI" id="CHEBI:18420"/>
    </cofactor>
</comment>
<comment type="activity regulation">
    <text evidence="8 21 25 26">Inhibited by the C-terminal non-catalytic region. Activated by caspase-cleavage. Full activation also requires homodimerization and autophosphorylation of Thr-180, which are inhibited by the proto-oncogene product RAF1. Activated by RASSF1 which acts by preventing its dephosphorylation. When autophosphorylated at Thr-180, recruits STRIPAK complex and promotes PP2A-mediated dephosphorylation and inactivation of STK3 (PubMed:29063833, PubMed:30622739).</text>
</comment>
<comment type="subunit">
    <text evidence="1 8 9 10 11 14 15 16 18 19 21 23 24 25 26">Homodimer; mediated via the coiled-coil region. Interacts with NORE1, which inhibits autoactivation (By similarity). Interacts with and stabilizes SAV1 (PubMed:15688006, PubMed:16930133, PubMed:28087714, PubMed:29063833). Interacts with RAF1, which prevents dimerization and phosphorylation. Interacts with RASSF1. Interacts (via SARAH domain) with isoform 1 of NEK2. Interacts with ESR1 only in the presence of SAV1. Interacts with PKB/AKT1. Forms a tripartite complex with MOBKL1B and STK38. Interacts with RASSF2 (via SARAH domain). Interacts with DLG5 (via PDZ domain 3) (PubMed:28087714). Interacts with LATS1; this interaction is inhibited in the presence of DLG5 (PubMed:28087714). Interacts with MARK3 in the presence of DLG5 (PubMed:28087714). Interacts with RASSF5; this interaction inhibits STK3 autoactivation through heterodimerization (PubMed:23972470). Interacts (when phosphorylated) with SLMAP (via FHA domain); the interaction associates STK3 with the STRIPAK complex (PubMed:29063833, PubMed:30622739).</text>
</comment>
<comment type="interaction">
    <interactant intactId="EBI-992580">
        <id>Q13188</id>
    </interactant>
    <interactant intactId="EBI-10175124">
        <id>Q8IZU0</id>
        <label>FAM9B</label>
    </interactant>
    <organismsDiffer>false</organismsDiffer>
    <experiments>3</experiments>
</comment>
<comment type="interaction">
    <interactant intactId="EBI-992580">
        <id>Q13188</id>
    </interactant>
    <interactant intactId="EBI-10172181">
        <id>Q53SE7</id>
        <label>FLJ13057</label>
    </interactant>
    <organismsDiffer>false</organismsDiffer>
    <experiments>3</experiments>
</comment>
<comment type="interaction">
    <interactant intactId="EBI-992580">
        <id>Q13188</id>
    </interactant>
    <interactant intactId="EBI-712001">
        <id>O95166</id>
        <label>GABARAP</label>
    </interactant>
    <organismsDiffer>false</organismsDiffer>
    <experiments>2</experiments>
</comment>
<comment type="interaction">
    <interactant intactId="EBI-992580">
        <id>Q13188</id>
    </interactant>
    <interactant intactId="EBI-746969">
        <id>Q9H0R8</id>
        <label>GABARAPL1</label>
    </interactant>
    <organismsDiffer>false</organismsDiffer>
    <experiments>2</experiments>
</comment>
<comment type="interaction">
    <interactant intactId="EBI-992580">
        <id>Q13188</id>
    </interactant>
    <interactant intactId="EBI-720116">
        <id>P60520</id>
        <label>GABARAPL2</label>
    </interactant>
    <organismsDiffer>false</organismsDiffer>
    <experiments>2</experiments>
</comment>
<comment type="interaction">
    <interactant intactId="EBI-992580">
        <id>Q13188</id>
    </interactant>
    <interactant intactId="EBI-743184">
        <id>Q99259</id>
        <label>GAD1</label>
    </interactant>
    <organismsDiffer>false</organismsDiffer>
    <experiments>3</experiments>
</comment>
<comment type="interaction">
    <interactant intactId="EBI-992580">
        <id>Q13188</id>
    </interactant>
    <interactant intactId="EBI-1055254">
        <id>Q8WXH2</id>
        <label>JPH3</label>
    </interactant>
    <organismsDiffer>false</organismsDiffer>
    <experiments>3</experiments>
</comment>
<comment type="interaction">
    <interactant intactId="EBI-992580">
        <id>Q13188</id>
    </interactant>
    <interactant intactId="EBI-373144">
        <id>Q9GZQ8</id>
        <label>MAP1LC3B</label>
    </interactant>
    <organismsDiffer>false</organismsDiffer>
    <experiments>5</experiments>
</comment>
<comment type="interaction">
    <interactant intactId="EBI-992580">
        <id>Q13188</id>
    </interactant>
    <interactant intactId="EBI-2603996">
        <id>Q9BXW4</id>
        <label>MAP1LC3C</label>
    </interactant>
    <organismsDiffer>false</organismsDiffer>
    <experiments>2</experiments>
</comment>
<comment type="interaction">
    <interactant intactId="EBI-992580">
        <id>Q13188</id>
    </interactant>
    <interactant intactId="EBI-748229">
        <id>Q9H8S9</id>
        <label>MOB1A</label>
    </interactant>
    <organismsDiffer>false</organismsDiffer>
    <experiments>7</experiments>
</comment>
<comment type="interaction">
    <interactant intactId="EBI-992580">
        <id>Q13188</id>
    </interactant>
    <interactant intactId="EBI-2558745">
        <id>Q7L9L4</id>
        <label>MOB1B</label>
    </interactant>
    <organismsDiffer>false</organismsDiffer>
    <experiments>9</experiments>
</comment>
<comment type="interaction">
    <interactant intactId="EBI-992580">
        <id>Q13188</id>
    </interactant>
    <interactant intactId="EBI-751703">
        <id>Q86TA1</id>
        <label>MOB3B</label>
    </interactant>
    <organismsDiffer>false</organismsDiffer>
    <experiments>3</experiments>
</comment>
<comment type="interaction">
    <interactant intactId="EBI-992580">
        <id>Q13188</id>
    </interactant>
    <interactant intactId="EBI-742388">
        <id>Q9H8W4</id>
        <label>PLEKHF2</label>
    </interactant>
    <organismsDiffer>false</organismsDiffer>
    <experiments>3</experiments>
</comment>
<comment type="interaction">
    <interactant intactId="EBI-992580">
        <id>Q13188</id>
    </interactant>
    <interactant intactId="EBI-365996">
        <id>P04049</id>
        <label>RAF1</label>
    </interactant>
    <organismsDiffer>false</organismsDiffer>
    <experiments>6</experiments>
</comment>
<comment type="interaction">
    <interactant intactId="EBI-992580">
        <id>Q13188</id>
    </interactant>
    <interactant intactId="EBI-438698">
        <id>Q9NS23-2</id>
        <label>RASSF1</label>
    </interactant>
    <organismsDiffer>false</organismsDiffer>
    <experiments>7</experiments>
</comment>
<comment type="interaction">
    <interactant intactId="EBI-992580">
        <id>Q13188</id>
    </interactant>
    <interactant intactId="EBI-960081">
        <id>P50749</id>
        <label>RASSF2</label>
    </interactant>
    <organismsDiffer>false</organismsDiffer>
    <experiments>21</experiments>
</comment>
<comment type="interaction">
    <interactant intactId="EBI-992580">
        <id>Q13188</id>
    </interactant>
    <interactant intactId="EBI-2845202">
        <id>Q86WH2</id>
        <label>RASSF3</label>
    </interactant>
    <organismsDiffer>false</organismsDiffer>
    <experiments>7</experiments>
</comment>
<comment type="interaction">
    <interactant intactId="EBI-992580">
        <id>Q13188</id>
    </interactant>
    <interactant intactId="EBI-2933362">
        <id>Q9H2L5</id>
        <label>RASSF4</label>
    </interactant>
    <organismsDiffer>false</organismsDiffer>
    <experiments>11</experiments>
</comment>
<comment type="interaction">
    <interactant intactId="EBI-992580">
        <id>Q13188</id>
    </interactant>
    <interactant intactId="EBI-367390">
        <id>Q8WWW0</id>
        <label>RASSF5</label>
    </interactant>
    <organismsDiffer>false</organismsDiffer>
    <experiments>9</experiments>
</comment>
<comment type="interaction">
    <interactant intactId="EBI-992580">
        <id>Q13188</id>
    </interactant>
    <interactant intactId="EBI-960496">
        <id>Q8WWW0-1</id>
        <label>RASSF5</label>
    </interactant>
    <organismsDiffer>false</organismsDiffer>
    <experiments>6</experiments>
</comment>
<comment type="interaction">
    <interactant intactId="EBI-992580">
        <id>Q13188</id>
    </interactant>
    <interactant intactId="EBI-2933412">
        <id>Q6ZTQ3</id>
        <label>RASSF6</label>
    </interactant>
    <organismsDiffer>false</organismsDiffer>
    <experiments>3</experiments>
</comment>
<comment type="interaction">
    <interactant intactId="EBI-992580">
        <id>Q13188</id>
    </interactant>
    <interactant intactId="EBI-1017775">
        <id>Q9H4B6</id>
        <label>SAV1</label>
    </interactant>
    <organismsDiffer>false</organismsDiffer>
    <experiments>29</experiments>
</comment>
<comment type="interaction">
    <interactant intactId="EBI-992580">
        <id>Q13188</id>
    </interactant>
    <interactant intactId="EBI-1043216">
        <id>Q14BN4</id>
        <label>SLMAP</label>
    </interactant>
    <organismsDiffer>false</organismsDiffer>
    <experiments>7</experiments>
</comment>
<comment type="interaction">
    <interactant intactId="EBI-992580">
        <id>Q13188</id>
    </interactant>
    <interactant intactId="EBI-749336">
        <id>Q8TAD8</id>
        <label>SNIP1</label>
    </interactant>
    <organismsDiffer>false</organismsDiffer>
    <experiments>3</experiments>
</comment>
<comment type="interaction">
    <interactant intactId="EBI-992580">
        <id>Q13188</id>
    </interactant>
    <interactant intactId="EBI-992580">
        <id>Q13188</id>
        <label>STK3</label>
    </interactant>
    <organismsDiffer>false</organismsDiffer>
    <experiments>13</experiments>
</comment>
<comment type="interaction">
    <interactant intactId="EBI-992580">
        <id>Q13188</id>
    </interactant>
    <interactant intactId="EBI-367376">
        <id>Q13043</id>
        <label>STK4</label>
    </interactant>
    <organismsDiffer>false</organismsDiffer>
    <experiments>20</experiments>
</comment>
<comment type="interaction">
    <interactant intactId="EBI-992580">
        <id>Q13188</id>
    </interactant>
    <interactant intactId="EBI-1245626">
        <id>P0C1Z6</id>
        <label>TFPT</label>
    </interactant>
    <organismsDiffer>false</organismsDiffer>
    <experiments>3</experiments>
</comment>
<comment type="interaction">
    <interactant intactId="EBI-992580">
        <id>Q13188</id>
    </interactant>
    <interactant intactId="EBI-10178002">
        <id>P0C1Z6-2</id>
        <label>TFPT</label>
    </interactant>
    <organismsDiffer>false</organismsDiffer>
    <experiments>3</experiments>
</comment>
<comment type="interaction">
    <interactant intactId="EBI-992580">
        <id>Q13188</id>
    </interactant>
    <interactant intactId="EBI-359224">
        <id>Q13077</id>
        <label>TRAF1</label>
    </interactant>
    <organismsDiffer>false</organismsDiffer>
    <experiments>6</experiments>
</comment>
<comment type="subcellular location">
    <subcellularLocation>
        <location evidence="20 25">Cytoplasm</location>
    </subcellularLocation>
    <subcellularLocation>
        <location evidence="20">Nucleus</location>
    </subcellularLocation>
    <subcellularLocation>
        <location evidence="27">Cytoplasm</location>
        <location evidence="27">Cytoskeleton</location>
        <location evidence="27">Microtubule organizing center</location>
        <location evidence="27">Centrosome</location>
    </subcellularLocation>
    <text evidence="7 15">The caspase-cleaved form cycles between nucleus and cytoplasm (PubMed:11278283, PubMed:19525978). Phosphorylation at Thr-117 leads to inhibition of nuclear translocation (PubMed:19525978).</text>
</comment>
<comment type="alternative products">
    <event type="alternative splicing"/>
    <isoform>
        <id>Q13188-1</id>
        <name>1</name>
        <sequence type="displayed"/>
    </isoform>
    <isoform>
        <id>Q13188-2</id>
        <name>2</name>
        <sequence type="described" ref="VSP_054167"/>
    </isoform>
</comment>
<comment type="tissue specificity">
    <text evidence="28">Expressed at high levels in adult kidney, skeletal and placenta tissues and at very low levels in adult heart, lung and brain tissues.</text>
</comment>
<comment type="induction">
    <text evidence="13">Activity increases during mitosis.</text>
</comment>
<comment type="PTM">
    <text evidence="7 16 22 23 25 26">Autophosphorylated on two residues Thr-174 and Thr-180, leading to activation (PubMed:23972470, PubMed:29063833). Phosphorylation at Thr-117 and Thr-384 by PKB/AKT1, leads to inhibition of its: cleavage, kinase activity, autophosphorylation at Thr-180, binding to RASSF1 and nuclear translocation, and increase in its binding to RAF1. Phosphorylated at Ser-15 by PLK1, leading to activation (PubMed:21723128). When autophosphorylated at Thr-180, recruits STRIPAK complex and promotes PP2A-mediated dephosphorylation and inactivation of STK3 (PubMed:29063833, PubMed:30622739).</text>
</comment>
<comment type="PTM">
    <text evidence="7">Proteolytically cleaved by caspase-3 during apoptosis. Proteolytic cleavage results in kinase activation and nuclear translocation of the truncated form (MST1/N).</text>
</comment>
<comment type="PTM">
    <text evidence="27">Ubiquitinated by TRIM69; leading to its redistribution to the perinuclear cytoskeleton, where it is phosphorylated by PLK1 and subsequently activated.</text>
</comment>
<comment type="similarity">
    <text evidence="34">Belongs to the protein kinase superfamily. STE Ser/Thr protein kinase family. STE20 subfamily.</text>
</comment>
<comment type="caution">
    <text evidence="35 36">PUBMED:20231902 has been retracted because there was evidence of data fabrication and/or falsification in multiple figure panels.</text>
</comment>
<accession>Q13188</accession>
<accession>A8K722</accession>
<accession>B3KYA7</accession>
<accession>Q15445</accession>
<accession>Q15801</accession>
<accession>Q96FM6</accession>
<dbReference type="EC" id="2.7.11.1" evidence="9"/>
<dbReference type="EMBL" id="U26424">
    <property type="protein sequence ID" value="AAC50386.1"/>
    <property type="molecule type" value="mRNA"/>
</dbReference>
<dbReference type="EMBL" id="U60206">
    <property type="protein sequence ID" value="AAB17261.1"/>
    <property type="molecule type" value="mRNA"/>
</dbReference>
<dbReference type="EMBL" id="AK131363">
    <property type="protein sequence ID" value="BAG54769.1"/>
    <property type="molecule type" value="mRNA"/>
</dbReference>
<dbReference type="EMBL" id="AK291837">
    <property type="protein sequence ID" value="BAF84526.1"/>
    <property type="molecule type" value="mRNA"/>
</dbReference>
<dbReference type="EMBL" id="AC016877">
    <property type="status" value="NOT_ANNOTATED_CDS"/>
    <property type="molecule type" value="Genomic_DNA"/>
</dbReference>
<dbReference type="EMBL" id="AP002087">
    <property type="status" value="NOT_ANNOTATED_CDS"/>
    <property type="molecule type" value="Genomic_DNA"/>
</dbReference>
<dbReference type="EMBL" id="AP003355">
    <property type="status" value="NOT_ANNOTATED_CDS"/>
    <property type="molecule type" value="Genomic_DNA"/>
</dbReference>
<dbReference type="EMBL" id="AP003467">
    <property type="status" value="NOT_ANNOTATED_CDS"/>
    <property type="molecule type" value="Genomic_DNA"/>
</dbReference>
<dbReference type="EMBL" id="AP003551">
    <property type="status" value="NOT_ANNOTATED_CDS"/>
    <property type="molecule type" value="Genomic_DNA"/>
</dbReference>
<dbReference type="EMBL" id="CH471060">
    <property type="protein sequence ID" value="EAW91781.1"/>
    <property type="molecule type" value="Genomic_DNA"/>
</dbReference>
<dbReference type="EMBL" id="BC010640">
    <property type="protein sequence ID" value="AAH10640.1"/>
    <property type="molecule type" value="mRNA"/>
</dbReference>
<dbReference type="EMBL" id="Z25422">
    <property type="protein sequence ID" value="CAA80909.1"/>
    <property type="molecule type" value="mRNA"/>
</dbReference>
<dbReference type="CCDS" id="CCDS47900.1">
    <molecule id="Q13188-1"/>
</dbReference>
<dbReference type="CCDS" id="CCDS59108.1">
    <molecule id="Q13188-2"/>
</dbReference>
<dbReference type="PIR" id="I38212">
    <property type="entry name" value="I38212"/>
</dbReference>
<dbReference type="RefSeq" id="NP_001243241.1">
    <molecule id="Q13188-2"/>
    <property type="nucleotide sequence ID" value="NM_001256312.2"/>
</dbReference>
<dbReference type="RefSeq" id="NP_006272.2">
    <molecule id="Q13188-1"/>
    <property type="nucleotide sequence ID" value="NM_006281.4"/>
</dbReference>
<dbReference type="PDB" id="3WWS">
    <property type="method" value="X-ray"/>
    <property type="resolution" value="2.01 A"/>
    <property type="chains" value="A/B/C/D=436-484"/>
</dbReference>
<dbReference type="PDB" id="4HKD">
    <property type="method" value="X-ray"/>
    <property type="resolution" value="1.50 A"/>
    <property type="chains" value="A/B/C/D=436-484"/>
</dbReference>
<dbReference type="PDB" id="4L0N">
    <property type="method" value="X-ray"/>
    <property type="resolution" value="1.40 A"/>
    <property type="chains" value="A/B/C/D/E/F/G/H/I/J=436-484"/>
</dbReference>
<dbReference type="PDB" id="4LG4">
    <property type="method" value="X-ray"/>
    <property type="resolution" value="2.42 A"/>
    <property type="chains" value="A/B/C/D/E/F=16-313"/>
</dbReference>
<dbReference type="PDB" id="4LGD">
    <property type="method" value="X-ray"/>
    <property type="resolution" value="3.05 A"/>
    <property type="chains" value="A/B/C/D=9-491"/>
</dbReference>
<dbReference type="PDB" id="4OH9">
    <property type="method" value="X-ray"/>
    <property type="resolution" value="1.70 A"/>
    <property type="chains" value="A/B=436-484"/>
</dbReference>
<dbReference type="PDB" id="5BRM">
    <property type="method" value="X-ray"/>
    <property type="resolution" value="2.65 A"/>
    <property type="chains" value="G/H/I/J/K/L/M/N/O=371-401"/>
</dbReference>
<dbReference type="PDB" id="5DH3">
    <property type="method" value="X-ray"/>
    <property type="resolution" value="2.47 A"/>
    <property type="chains" value="A/B=15-313"/>
</dbReference>
<dbReference type="PDB" id="6AO5">
    <property type="method" value="X-ray"/>
    <property type="resolution" value="2.96 A"/>
    <property type="chains" value="A=16-491"/>
</dbReference>
<dbReference type="PDB" id="6AR2">
    <property type="method" value="X-ray"/>
    <property type="resolution" value="1.55 A"/>
    <property type="chains" value="C/D=373-382"/>
</dbReference>
<dbReference type="PDB" id="8A66">
    <property type="method" value="X-ray"/>
    <property type="resolution" value="1.90 A"/>
    <property type="chains" value="A/B=16-312"/>
</dbReference>
<dbReference type="PDBsum" id="3WWS"/>
<dbReference type="PDBsum" id="4HKD"/>
<dbReference type="PDBsum" id="4L0N"/>
<dbReference type="PDBsum" id="4LG4"/>
<dbReference type="PDBsum" id="4LGD"/>
<dbReference type="PDBsum" id="4OH9"/>
<dbReference type="PDBsum" id="5BRM"/>
<dbReference type="PDBsum" id="5DH3"/>
<dbReference type="PDBsum" id="6AO5"/>
<dbReference type="PDBsum" id="6AR2"/>
<dbReference type="PDBsum" id="8A66"/>
<dbReference type="SMR" id="Q13188"/>
<dbReference type="BioGRID" id="112664">
    <property type="interactions" value="202"/>
</dbReference>
<dbReference type="CORUM" id="Q13188"/>
<dbReference type="DIP" id="DIP-36128N"/>
<dbReference type="ELM" id="Q13188"/>
<dbReference type="FunCoup" id="Q13188">
    <property type="interactions" value="2383"/>
</dbReference>
<dbReference type="IntAct" id="Q13188">
    <property type="interactions" value="131"/>
</dbReference>
<dbReference type="MINT" id="Q13188"/>
<dbReference type="STRING" id="9606.ENSP00000429744"/>
<dbReference type="BindingDB" id="Q13188"/>
<dbReference type="ChEMBL" id="CHEMBL4708"/>
<dbReference type="DrugBank" id="DB12010">
    <property type="generic name" value="Fostamatinib"/>
</dbReference>
<dbReference type="DrugCentral" id="Q13188"/>
<dbReference type="GuidetoPHARMACOLOGY" id="2219"/>
<dbReference type="GlyGen" id="Q13188">
    <property type="glycosylation" value="1 site, 1 O-linked glycan (1 site)"/>
</dbReference>
<dbReference type="iPTMnet" id="Q13188"/>
<dbReference type="MetOSite" id="Q13188"/>
<dbReference type="PhosphoSitePlus" id="Q13188"/>
<dbReference type="BioMuta" id="STK3"/>
<dbReference type="DMDM" id="46577700"/>
<dbReference type="OGP" id="Q13188"/>
<dbReference type="CPTAC" id="non-CPTAC-2872"/>
<dbReference type="CPTAC" id="non-CPTAC-2873"/>
<dbReference type="CPTAC" id="non-CPTAC-5686"/>
<dbReference type="jPOST" id="Q13188"/>
<dbReference type="MassIVE" id="Q13188"/>
<dbReference type="PaxDb" id="9606-ENSP00000429744"/>
<dbReference type="PeptideAtlas" id="Q13188"/>
<dbReference type="ProteomicsDB" id="3835"/>
<dbReference type="ProteomicsDB" id="59211">
    <molecule id="Q13188-1"/>
</dbReference>
<dbReference type="Pumba" id="Q13188"/>
<dbReference type="Antibodypedia" id="26075">
    <property type="antibodies" value="496 antibodies from 41 providers"/>
</dbReference>
<dbReference type="DNASU" id="6788"/>
<dbReference type="Ensembl" id="ENST00000419617.7">
    <molecule id="Q13188-1"/>
    <property type="protein sequence ID" value="ENSP00000390500.2"/>
    <property type="gene ID" value="ENSG00000104375.17"/>
</dbReference>
<dbReference type="Ensembl" id="ENST00000523601.5">
    <molecule id="Q13188-2"/>
    <property type="protein sequence ID" value="ENSP00000429744.1"/>
    <property type="gene ID" value="ENSG00000104375.17"/>
</dbReference>
<dbReference type="GeneID" id="6788"/>
<dbReference type="KEGG" id="hsa:6788"/>
<dbReference type="MANE-Select" id="ENST00000419617.7">
    <property type="protein sequence ID" value="ENSP00000390500.2"/>
    <property type="RefSeq nucleotide sequence ID" value="NM_006281.4"/>
    <property type="RefSeq protein sequence ID" value="NP_006272.2"/>
</dbReference>
<dbReference type="UCSC" id="uc003yio.5">
    <molecule id="Q13188-1"/>
    <property type="organism name" value="human"/>
</dbReference>
<dbReference type="AGR" id="HGNC:11406"/>
<dbReference type="CTD" id="6788"/>
<dbReference type="DisGeNET" id="6788"/>
<dbReference type="GeneCards" id="STK3"/>
<dbReference type="HGNC" id="HGNC:11406">
    <property type="gene designation" value="STK3"/>
</dbReference>
<dbReference type="HPA" id="ENSG00000104375">
    <property type="expression patterns" value="Low tissue specificity"/>
</dbReference>
<dbReference type="MIM" id="605030">
    <property type="type" value="gene"/>
</dbReference>
<dbReference type="neXtProt" id="NX_Q13188"/>
<dbReference type="OpenTargets" id="ENSG00000104375"/>
<dbReference type="PharmGKB" id="PA36213"/>
<dbReference type="VEuPathDB" id="HostDB:ENSG00000104375"/>
<dbReference type="eggNOG" id="KOG0574">
    <property type="taxonomic scope" value="Eukaryota"/>
</dbReference>
<dbReference type="GeneTree" id="ENSGT00940000154984"/>
<dbReference type="HOGENOM" id="CLU_000288_63_23_1"/>
<dbReference type="InParanoid" id="Q13188"/>
<dbReference type="OMA" id="LNQISHP"/>
<dbReference type="OrthoDB" id="8693905at2759"/>
<dbReference type="PAN-GO" id="Q13188">
    <property type="GO annotations" value="5 GO annotations based on evolutionary models"/>
</dbReference>
<dbReference type="PhylomeDB" id="Q13188"/>
<dbReference type="TreeFam" id="TF354217"/>
<dbReference type="BRENDA" id="2.7.11.1">
    <property type="organism ID" value="2681"/>
</dbReference>
<dbReference type="PathwayCommons" id="Q13188"/>
<dbReference type="Reactome" id="R-HSA-2028269">
    <property type="pathway name" value="Signaling by Hippo"/>
</dbReference>
<dbReference type="SignaLink" id="Q13188"/>
<dbReference type="SIGNOR" id="Q13188"/>
<dbReference type="BioGRID-ORCS" id="6788">
    <property type="hits" value="50 hits in 1189 CRISPR screens"/>
</dbReference>
<dbReference type="CD-CODE" id="8C2F96ED">
    <property type="entry name" value="Centrosome"/>
</dbReference>
<dbReference type="ChiTaRS" id="STK3">
    <property type="organism name" value="human"/>
</dbReference>
<dbReference type="EvolutionaryTrace" id="Q13188"/>
<dbReference type="GeneWiki" id="STK3"/>
<dbReference type="GenomeRNAi" id="6788"/>
<dbReference type="Pharos" id="Q13188">
    <property type="development level" value="Tchem"/>
</dbReference>
<dbReference type="PRO" id="PR:Q13188"/>
<dbReference type="Proteomes" id="UP000005640">
    <property type="component" value="Chromosome 8"/>
</dbReference>
<dbReference type="RNAct" id="Q13188">
    <property type="molecule type" value="protein"/>
</dbReference>
<dbReference type="Bgee" id="ENSG00000104375">
    <property type="expression patterns" value="Expressed in calcaneal tendon and 202 other cell types or tissues"/>
</dbReference>
<dbReference type="ExpressionAtlas" id="Q13188">
    <property type="expression patterns" value="baseline and differential"/>
</dbReference>
<dbReference type="GO" id="GO:0005813">
    <property type="term" value="C:centrosome"/>
    <property type="evidence" value="ECO:0000314"/>
    <property type="project" value="UniProt"/>
</dbReference>
<dbReference type="GO" id="GO:0005737">
    <property type="term" value="C:cytoplasm"/>
    <property type="evidence" value="ECO:0000314"/>
    <property type="project" value="UniProtKB"/>
</dbReference>
<dbReference type="GO" id="GO:0005829">
    <property type="term" value="C:cytosol"/>
    <property type="evidence" value="ECO:0000304"/>
    <property type="project" value="Reactome"/>
</dbReference>
<dbReference type="GO" id="GO:0005634">
    <property type="term" value="C:nucleus"/>
    <property type="evidence" value="ECO:0000314"/>
    <property type="project" value="UniProtKB"/>
</dbReference>
<dbReference type="GO" id="GO:0032991">
    <property type="term" value="C:protein-containing complex"/>
    <property type="evidence" value="ECO:0000314"/>
    <property type="project" value="MGI"/>
</dbReference>
<dbReference type="GO" id="GO:0005524">
    <property type="term" value="F:ATP binding"/>
    <property type="evidence" value="ECO:0000314"/>
    <property type="project" value="UniProtKB"/>
</dbReference>
<dbReference type="GO" id="GO:0042802">
    <property type="term" value="F:identical protein binding"/>
    <property type="evidence" value="ECO:0000353"/>
    <property type="project" value="IntAct"/>
</dbReference>
<dbReference type="GO" id="GO:0000287">
    <property type="term" value="F:magnesium ion binding"/>
    <property type="evidence" value="ECO:0000314"/>
    <property type="project" value="UniProtKB"/>
</dbReference>
<dbReference type="GO" id="GO:0004672">
    <property type="term" value="F:protein kinase activity"/>
    <property type="evidence" value="ECO:0000314"/>
    <property type="project" value="UniProtKB"/>
</dbReference>
<dbReference type="GO" id="GO:0106310">
    <property type="term" value="F:protein serine kinase activity"/>
    <property type="evidence" value="ECO:0007669"/>
    <property type="project" value="RHEA"/>
</dbReference>
<dbReference type="GO" id="GO:0043539">
    <property type="term" value="F:protein serine/threonine kinase activator activity"/>
    <property type="evidence" value="ECO:0000304"/>
    <property type="project" value="BHF-UCL"/>
</dbReference>
<dbReference type="GO" id="GO:0004674">
    <property type="term" value="F:protein serine/threonine kinase activity"/>
    <property type="evidence" value="ECO:0000314"/>
    <property type="project" value="UniProtKB"/>
</dbReference>
<dbReference type="GO" id="GO:0140537">
    <property type="term" value="F:transcription regulator activator activity"/>
    <property type="evidence" value="ECO:0000316"/>
    <property type="project" value="MGI"/>
</dbReference>
<dbReference type="GO" id="GO:0006915">
    <property type="term" value="P:apoptotic process"/>
    <property type="evidence" value="ECO:0000304"/>
    <property type="project" value="UniProtKB"/>
</dbReference>
<dbReference type="GO" id="GO:0060070">
    <property type="term" value="P:canonical Wnt signaling pathway"/>
    <property type="evidence" value="ECO:0007669"/>
    <property type="project" value="Ensembl"/>
</dbReference>
<dbReference type="GO" id="GO:0060706">
    <property type="term" value="P:cell differentiation involved in embryonic placenta development"/>
    <property type="evidence" value="ECO:0007669"/>
    <property type="project" value="Ensembl"/>
</dbReference>
<dbReference type="GO" id="GO:0007417">
    <property type="term" value="P:central nervous system development"/>
    <property type="evidence" value="ECO:0007669"/>
    <property type="project" value="Ensembl"/>
</dbReference>
<dbReference type="GO" id="GO:0003157">
    <property type="term" value="P:endocardium development"/>
    <property type="evidence" value="ECO:0007669"/>
    <property type="project" value="Ensembl"/>
</dbReference>
<dbReference type="GO" id="GO:0050673">
    <property type="term" value="P:epithelial cell proliferation"/>
    <property type="evidence" value="ECO:0007669"/>
    <property type="project" value="Ensembl"/>
</dbReference>
<dbReference type="GO" id="GO:0008625">
    <property type="term" value="P:extrinsic apoptotic signaling pathway via death domain receptors"/>
    <property type="evidence" value="ECO:0007669"/>
    <property type="project" value="Ensembl"/>
</dbReference>
<dbReference type="GO" id="GO:0097284">
    <property type="term" value="P:hepatocyte apoptotic process"/>
    <property type="evidence" value="ECO:0007669"/>
    <property type="project" value="Ensembl"/>
</dbReference>
<dbReference type="GO" id="GO:0035329">
    <property type="term" value="P:hippo signaling"/>
    <property type="evidence" value="ECO:0000314"/>
    <property type="project" value="UniProtKB"/>
</dbReference>
<dbReference type="GO" id="GO:0035556">
    <property type="term" value="P:intracellular signal transduction"/>
    <property type="evidence" value="ECO:0000314"/>
    <property type="project" value="UniProtKB"/>
</dbReference>
<dbReference type="GO" id="GO:0007254">
    <property type="term" value="P:JNK cascade"/>
    <property type="evidence" value="ECO:0007669"/>
    <property type="project" value="Ensembl"/>
</dbReference>
<dbReference type="GO" id="GO:0090090">
    <property type="term" value="P:negative regulation of canonical Wnt signaling pathway"/>
    <property type="evidence" value="ECO:0000315"/>
    <property type="project" value="BHF-UCL"/>
</dbReference>
<dbReference type="GO" id="GO:0050680">
    <property type="term" value="P:negative regulation of epithelial cell proliferation"/>
    <property type="evidence" value="ECO:0007669"/>
    <property type="project" value="Ensembl"/>
</dbReference>
<dbReference type="GO" id="GO:0046621">
    <property type="term" value="P:negative regulation of organ growth"/>
    <property type="evidence" value="ECO:0007669"/>
    <property type="project" value="Ensembl"/>
</dbReference>
<dbReference type="GO" id="GO:0001841">
    <property type="term" value="P:neural tube formation"/>
    <property type="evidence" value="ECO:0007669"/>
    <property type="project" value="Ensembl"/>
</dbReference>
<dbReference type="GO" id="GO:0035265">
    <property type="term" value="P:organ growth"/>
    <property type="evidence" value="ECO:0007669"/>
    <property type="project" value="Ensembl"/>
</dbReference>
<dbReference type="GO" id="GO:0043491">
    <property type="term" value="P:phosphatidylinositol 3-kinase/protein kinase B signal transduction"/>
    <property type="evidence" value="ECO:0007669"/>
    <property type="project" value="Ensembl"/>
</dbReference>
<dbReference type="GO" id="GO:0043065">
    <property type="term" value="P:positive regulation of apoptotic process"/>
    <property type="evidence" value="ECO:0000250"/>
    <property type="project" value="UniProtKB"/>
</dbReference>
<dbReference type="GO" id="GO:1902043">
    <property type="term" value="P:positive regulation of extrinsic apoptotic signaling pathway via death domain receptors"/>
    <property type="evidence" value="ECO:0007669"/>
    <property type="project" value="Ensembl"/>
</dbReference>
<dbReference type="GO" id="GO:0045600">
    <property type="term" value="P:positive regulation of fat cell differentiation"/>
    <property type="evidence" value="ECO:0007669"/>
    <property type="project" value="Ensembl"/>
</dbReference>
<dbReference type="GO" id="GO:0035332">
    <property type="term" value="P:positive regulation of hippo signaling"/>
    <property type="evidence" value="ECO:0000314"/>
    <property type="project" value="MGI"/>
</dbReference>
<dbReference type="GO" id="GO:0046330">
    <property type="term" value="P:positive regulation of JNK cascade"/>
    <property type="evidence" value="ECO:0007669"/>
    <property type="project" value="Ensembl"/>
</dbReference>
<dbReference type="GO" id="GO:0051897">
    <property type="term" value="P:positive regulation of phosphatidylinositol 3-kinase/protein kinase B signal transduction"/>
    <property type="evidence" value="ECO:0007669"/>
    <property type="project" value="Ensembl"/>
</dbReference>
<dbReference type="GO" id="GO:0060215">
    <property type="term" value="P:primitive hemopoiesis"/>
    <property type="evidence" value="ECO:0007669"/>
    <property type="project" value="Ensembl"/>
</dbReference>
<dbReference type="GO" id="GO:0006606">
    <property type="term" value="P:protein import into nucleus"/>
    <property type="evidence" value="ECO:0000316"/>
    <property type="project" value="UniProtKB"/>
</dbReference>
<dbReference type="GO" id="GO:0071539">
    <property type="term" value="P:protein localization to centrosome"/>
    <property type="evidence" value="ECO:0000314"/>
    <property type="project" value="UniProt"/>
</dbReference>
<dbReference type="GO" id="GO:0006468">
    <property type="term" value="P:protein phosphorylation"/>
    <property type="evidence" value="ECO:0000314"/>
    <property type="project" value="UniProtKB"/>
</dbReference>
<dbReference type="GO" id="GO:0050821">
    <property type="term" value="P:protein stabilization"/>
    <property type="evidence" value="ECO:0000315"/>
    <property type="project" value="MGI"/>
</dbReference>
<dbReference type="GO" id="GO:0051262">
    <property type="term" value="P:protein tetramerization"/>
    <property type="evidence" value="ECO:0007669"/>
    <property type="project" value="InterPro"/>
</dbReference>
<dbReference type="GO" id="GO:0060800">
    <property type="term" value="P:regulation of cell differentiation involved in embryonic placenta development"/>
    <property type="evidence" value="ECO:0007669"/>
    <property type="project" value="Ensembl"/>
</dbReference>
<dbReference type="GO" id="GO:0043408">
    <property type="term" value="P:regulation of MAPK cascade"/>
    <property type="evidence" value="ECO:0000318"/>
    <property type="project" value="GO_Central"/>
</dbReference>
<dbReference type="CDD" id="cd21888">
    <property type="entry name" value="SARAH_MST2"/>
    <property type="match status" value="1"/>
</dbReference>
<dbReference type="CDD" id="cd06612">
    <property type="entry name" value="STKc_MST1_2"/>
    <property type="match status" value="1"/>
</dbReference>
<dbReference type="DisProt" id="DP01461"/>
<dbReference type="FunFam" id="1.10.287.4270:FF:000001">
    <property type="entry name" value="Serine/threonine-protein kinase 3"/>
    <property type="match status" value="1"/>
</dbReference>
<dbReference type="FunFam" id="1.10.510.10:FF:000075">
    <property type="entry name" value="Serine/threonine-protein kinase 3"/>
    <property type="match status" value="1"/>
</dbReference>
<dbReference type="FunFam" id="3.30.200.20:FF:000410">
    <property type="entry name" value="Serine/threonine-protein kinase 3"/>
    <property type="match status" value="1"/>
</dbReference>
<dbReference type="FunFam" id="4.10.170.10:FF:000002">
    <property type="entry name" value="serine/threonine-protein kinase 3"/>
    <property type="match status" value="1"/>
</dbReference>
<dbReference type="Gene3D" id="1.10.287.4270">
    <property type="match status" value="1"/>
</dbReference>
<dbReference type="Gene3D" id="4.10.170.10">
    <property type="entry name" value="p53-like tetramerisation domain"/>
    <property type="match status" value="1"/>
</dbReference>
<dbReference type="Gene3D" id="1.10.510.10">
    <property type="entry name" value="Transferase(Phosphotransferase) domain 1"/>
    <property type="match status" value="1"/>
</dbReference>
<dbReference type="IDEAL" id="IID00721"/>
<dbReference type="InterPro" id="IPR011009">
    <property type="entry name" value="Kinase-like_dom_sf"/>
</dbReference>
<dbReference type="InterPro" id="IPR024205">
    <property type="entry name" value="Mst1_2_SARAH_domain"/>
</dbReference>
<dbReference type="InterPro" id="IPR049568">
    <property type="entry name" value="Mst2_SARAH"/>
</dbReference>
<dbReference type="InterPro" id="IPR036674">
    <property type="entry name" value="p53_tetramer_sf"/>
</dbReference>
<dbReference type="InterPro" id="IPR000719">
    <property type="entry name" value="Prot_kinase_dom"/>
</dbReference>
<dbReference type="InterPro" id="IPR017441">
    <property type="entry name" value="Protein_kinase_ATP_BS"/>
</dbReference>
<dbReference type="InterPro" id="IPR011524">
    <property type="entry name" value="SARAH_dom"/>
</dbReference>
<dbReference type="InterPro" id="IPR050629">
    <property type="entry name" value="STE20/SPS1-PAK"/>
</dbReference>
<dbReference type="PANTHER" id="PTHR48012:SF2">
    <property type="entry name" value="STERILE20-LIKE KINASE, ISOFORM B"/>
    <property type="match status" value="1"/>
</dbReference>
<dbReference type="PANTHER" id="PTHR48012">
    <property type="entry name" value="STERILE20-LIKE KINASE, ISOFORM B-RELATED"/>
    <property type="match status" value="1"/>
</dbReference>
<dbReference type="Pfam" id="PF11629">
    <property type="entry name" value="Mst1_SARAH"/>
    <property type="match status" value="1"/>
</dbReference>
<dbReference type="Pfam" id="PF00069">
    <property type="entry name" value="Pkinase"/>
    <property type="match status" value="1"/>
</dbReference>
<dbReference type="SMART" id="SM00220">
    <property type="entry name" value="S_TKc"/>
    <property type="match status" value="1"/>
</dbReference>
<dbReference type="SUPFAM" id="SSF56112">
    <property type="entry name" value="Protein kinase-like (PK-like)"/>
    <property type="match status" value="1"/>
</dbReference>
<dbReference type="PROSITE" id="PS00107">
    <property type="entry name" value="PROTEIN_KINASE_ATP"/>
    <property type="match status" value="1"/>
</dbReference>
<dbReference type="PROSITE" id="PS50011">
    <property type="entry name" value="PROTEIN_KINASE_DOM"/>
    <property type="match status" value="1"/>
</dbReference>
<dbReference type="PROSITE" id="PS50951">
    <property type="entry name" value="SARAH"/>
    <property type="match status" value="1"/>
</dbReference>
<sequence length="491" mass="56301">MEQPPAPKSKLKKLSEDSLTKQPEEVFDVLEKLGEGSYGSVFKAIHKESGQVVAIKQVPVESDLQEIIKEISIMQQCDSPYVVKYYGSYFKNTDLWIVMEYCGAGSVSDIIRLRNKTLIEDEIATILKSTLKGLEYLHFMRKIHRDIKAGNILLNTEGHAKLADFGVAGQLTDTMAKRNTVIGTPFWMAPEVIQEIGYNCVADIWSLGITSIEMAEGKPPYADIHPMRAIFMIPTNPPPTFRKPELWSDDFTDFVKKCLVKNPEQRATATQLLQHPFIKNAKPVSILRDLITEAMEIKAKRHEEQQRELEEEEENSDEDELDSHTMVKTSVESVGTMRATSTMSEGAQTMIEHNSTMLESDLGTMVINSEDEEEEDGTMKRNATSPQVQRPSFMDYFDKQDFKNKSHENCNQNMHEPFPMSKNVFPDNWKVPQDGDFDFLKNLSLEELQMRLKALDPMMEREIEELRQRYTAKRQPILDAMDAKKRRQQNF</sequence>
<evidence type="ECO:0000250" key="1">
    <source>
        <dbReference type="UniProtKB" id="Q13043"/>
    </source>
</evidence>
<evidence type="ECO:0000250" key="2">
    <source>
        <dbReference type="UniProtKB" id="Q9JI10"/>
    </source>
</evidence>
<evidence type="ECO:0000255" key="3"/>
<evidence type="ECO:0000255" key="4">
    <source>
        <dbReference type="PROSITE-ProRule" id="PRU00159"/>
    </source>
</evidence>
<evidence type="ECO:0000255" key="5">
    <source>
        <dbReference type="PROSITE-ProRule" id="PRU00310"/>
    </source>
</evidence>
<evidence type="ECO:0000256" key="6">
    <source>
        <dbReference type="SAM" id="MobiDB-lite"/>
    </source>
</evidence>
<evidence type="ECO:0000269" key="7">
    <source>
    </source>
</evidence>
<evidence type="ECO:0000269" key="8">
    <source>
    </source>
</evidence>
<evidence type="ECO:0000269" key="9">
    <source>
    </source>
</evidence>
<evidence type="ECO:0000269" key="10">
    <source>
    </source>
</evidence>
<evidence type="ECO:0000269" key="11">
    <source>
    </source>
</evidence>
<evidence type="ECO:0000269" key="12">
    <source>
    </source>
</evidence>
<evidence type="ECO:0000269" key="13">
    <source>
    </source>
</evidence>
<evidence type="ECO:0000269" key="14">
    <source>
    </source>
</evidence>
<evidence type="ECO:0000269" key="15">
    <source>
    </source>
</evidence>
<evidence type="ECO:0000269" key="16">
    <source>
    </source>
</evidence>
<evidence type="ECO:0000269" key="17">
    <source>
    </source>
</evidence>
<evidence type="ECO:0000269" key="18">
    <source>
    </source>
</evidence>
<evidence type="ECO:0000269" key="19">
    <source>
    </source>
</evidence>
<evidence type="ECO:0000269" key="20">
    <source>
    </source>
</evidence>
<evidence type="ECO:0000269" key="21">
    <source>
    </source>
</evidence>
<evidence type="ECO:0000269" key="22">
    <source>
    </source>
</evidence>
<evidence type="ECO:0000269" key="23">
    <source>
    </source>
</evidence>
<evidence type="ECO:0000269" key="24">
    <source>
    </source>
</evidence>
<evidence type="ECO:0000269" key="25">
    <source>
    </source>
</evidence>
<evidence type="ECO:0000269" key="26">
    <source>
    </source>
</evidence>
<evidence type="ECO:0000269" key="27">
    <source>
    </source>
</evidence>
<evidence type="ECO:0000269" key="28">
    <source>
    </source>
</evidence>
<evidence type="ECO:0000269" key="29">
    <source>
    </source>
</evidence>
<evidence type="ECO:0000269" key="30">
    <source ref="7"/>
</evidence>
<evidence type="ECO:0000303" key="31">
    <source>
    </source>
</evidence>
<evidence type="ECO:0000303" key="32">
    <source>
    </source>
</evidence>
<evidence type="ECO:0000303" key="33">
    <source>
    </source>
</evidence>
<evidence type="ECO:0000305" key="34"/>
<evidence type="ECO:0000305" key="35">
    <source>
    </source>
</evidence>
<evidence type="ECO:0000305" key="36">
    <source>
    </source>
</evidence>
<evidence type="ECO:0000312" key="37">
    <source>
        <dbReference type="HGNC" id="HGNC:11406"/>
    </source>
</evidence>
<evidence type="ECO:0007744" key="38">
    <source>
        <dbReference type="PDB" id="4LG4"/>
    </source>
</evidence>
<evidence type="ECO:0007744" key="39">
    <source>
        <dbReference type="PDB" id="4LGD"/>
    </source>
</evidence>
<evidence type="ECO:0007744" key="40">
    <source>
        <dbReference type="PDB" id="6AO5"/>
    </source>
</evidence>
<evidence type="ECO:0007744" key="41">
    <source>
        <dbReference type="PDB" id="6AR2"/>
    </source>
</evidence>
<evidence type="ECO:0007744" key="42">
    <source>
    </source>
</evidence>
<evidence type="ECO:0007744" key="43">
    <source>
    </source>
</evidence>
<evidence type="ECO:0007744" key="44">
    <source>
    </source>
</evidence>
<evidence type="ECO:0007744" key="45">
    <source>
    </source>
</evidence>
<evidence type="ECO:0007744" key="46">
    <source>
    </source>
</evidence>
<evidence type="ECO:0007744" key="47">
    <source>
    </source>
</evidence>
<evidence type="ECO:0007744" key="48">
    <source>
    </source>
</evidence>
<evidence type="ECO:0007829" key="49">
    <source>
        <dbReference type="PDB" id="4L0N"/>
    </source>
</evidence>
<evidence type="ECO:0007829" key="50">
    <source>
        <dbReference type="PDB" id="4LG4"/>
    </source>
</evidence>
<evidence type="ECO:0007829" key="51">
    <source>
        <dbReference type="PDB" id="4LGD"/>
    </source>
</evidence>
<evidence type="ECO:0007829" key="52">
    <source>
        <dbReference type="PDB" id="5BRM"/>
    </source>
</evidence>
<evidence type="ECO:0007829" key="53">
    <source>
        <dbReference type="PDB" id="5DH3"/>
    </source>
</evidence>
<evidence type="ECO:0007829" key="54">
    <source>
        <dbReference type="PDB" id="6AO5"/>
    </source>
</evidence>
<evidence type="ECO:0007829" key="55">
    <source>
        <dbReference type="PDB" id="8A66"/>
    </source>
</evidence>
<proteinExistence type="evidence at protein level"/>
<keyword id="KW-0002">3D-structure</keyword>
<keyword id="KW-0007">Acetylation</keyword>
<keyword id="KW-0025">Alternative splicing</keyword>
<keyword id="KW-0053">Apoptosis</keyword>
<keyword id="KW-0067">ATP-binding</keyword>
<keyword id="KW-0175">Coiled coil</keyword>
<keyword id="KW-0963">Cytoplasm</keyword>
<keyword id="KW-0206">Cytoskeleton</keyword>
<keyword id="KW-0903">Direct protein sequencing</keyword>
<keyword id="KW-0418">Kinase</keyword>
<keyword id="KW-0460">Magnesium</keyword>
<keyword id="KW-0479">Metal-binding</keyword>
<keyword id="KW-0547">Nucleotide-binding</keyword>
<keyword id="KW-0539">Nucleus</keyword>
<keyword id="KW-0597">Phosphoprotein</keyword>
<keyword id="KW-1267">Proteomics identification</keyword>
<keyword id="KW-1185">Reference proteome</keyword>
<keyword id="KW-0723">Serine/threonine-protein kinase</keyword>
<keyword id="KW-0808">Transferase</keyword>
<keyword id="KW-0832">Ubl conjugation</keyword>
<reference key="1">
    <citation type="journal article" date="1995" name="Gene">
        <title>Cloning and characterization of a member of the MST subfamily of Ste20-like kinases.</title>
        <authorList>
            <person name="Creasy C.L."/>
            <person name="Chernoff J."/>
        </authorList>
    </citation>
    <scope>NUCLEOTIDE SEQUENCE [MRNA] (ISOFORM 1)</scope>
    <scope>FUNCTION</scope>
    <scope>AUTOPHOSPHORYLATION</scope>
    <scope>TISSUE SPECIFICITY</scope>
</reference>
<reference key="2">
    <citation type="journal article" date="1996" name="Proc. Natl. Acad. Sci. U.S.A.">
        <title>Newly identified stress-responsive protein kinases, Krs-1 and Krs-2.</title>
        <authorList>
            <person name="Taylor L.K."/>
            <person name="Wang H.C."/>
            <person name="Erikson R.L."/>
        </authorList>
    </citation>
    <scope>NUCLEOTIDE SEQUENCE [MRNA] (ISOFORM 1)</scope>
    <scope>FUNCTION</scope>
</reference>
<reference key="3">
    <citation type="journal article" date="2004" name="Nat. Genet.">
        <title>Complete sequencing and characterization of 21,243 full-length human cDNAs.</title>
        <authorList>
            <person name="Ota T."/>
            <person name="Suzuki Y."/>
            <person name="Nishikawa T."/>
            <person name="Otsuki T."/>
            <person name="Sugiyama T."/>
            <person name="Irie R."/>
            <person name="Wakamatsu A."/>
            <person name="Hayashi K."/>
            <person name="Sato H."/>
            <person name="Nagai K."/>
            <person name="Kimura K."/>
            <person name="Makita H."/>
            <person name="Sekine M."/>
            <person name="Obayashi M."/>
            <person name="Nishi T."/>
            <person name="Shibahara T."/>
            <person name="Tanaka T."/>
            <person name="Ishii S."/>
            <person name="Yamamoto J."/>
            <person name="Saito K."/>
            <person name="Kawai Y."/>
            <person name="Isono Y."/>
            <person name="Nakamura Y."/>
            <person name="Nagahari K."/>
            <person name="Murakami K."/>
            <person name="Yasuda T."/>
            <person name="Iwayanagi T."/>
            <person name="Wagatsuma M."/>
            <person name="Shiratori A."/>
            <person name="Sudo H."/>
            <person name="Hosoiri T."/>
            <person name="Kaku Y."/>
            <person name="Kodaira H."/>
            <person name="Kondo H."/>
            <person name="Sugawara M."/>
            <person name="Takahashi M."/>
            <person name="Kanda K."/>
            <person name="Yokoi T."/>
            <person name="Furuya T."/>
            <person name="Kikkawa E."/>
            <person name="Omura Y."/>
            <person name="Abe K."/>
            <person name="Kamihara K."/>
            <person name="Katsuta N."/>
            <person name="Sato K."/>
            <person name="Tanikawa M."/>
            <person name="Yamazaki M."/>
            <person name="Ninomiya K."/>
            <person name="Ishibashi T."/>
            <person name="Yamashita H."/>
            <person name="Murakawa K."/>
            <person name="Fujimori K."/>
            <person name="Tanai H."/>
            <person name="Kimata M."/>
            <person name="Watanabe M."/>
            <person name="Hiraoka S."/>
            <person name="Chiba Y."/>
            <person name="Ishida S."/>
            <person name="Ono Y."/>
            <person name="Takiguchi S."/>
            <person name="Watanabe S."/>
            <person name="Yosida M."/>
            <person name="Hotuta T."/>
            <person name="Kusano J."/>
            <person name="Kanehori K."/>
            <person name="Takahashi-Fujii A."/>
            <person name="Hara H."/>
            <person name="Tanase T.-O."/>
            <person name="Nomura Y."/>
            <person name="Togiya S."/>
            <person name="Komai F."/>
            <person name="Hara R."/>
            <person name="Takeuchi K."/>
            <person name="Arita M."/>
            <person name="Imose N."/>
            <person name="Musashino K."/>
            <person name="Yuuki H."/>
            <person name="Oshima A."/>
            <person name="Sasaki N."/>
            <person name="Aotsuka S."/>
            <person name="Yoshikawa Y."/>
            <person name="Matsunawa H."/>
            <person name="Ichihara T."/>
            <person name="Shiohata N."/>
            <person name="Sano S."/>
            <person name="Moriya S."/>
            <person name="Momiyama H."/>
            <person name="Satoh N."/>
            <person name="Takami S."/>
            <person name="Terashima Y."/>
            <person name="Suzuki O."/>
            <person name="Nakagawa S."/>
            <person name="Senoh A."/>
            <person name="Mizoguchi H."/>
            <person name="Goto Y."/>
            <person name="Shimizu F."/>
            <person name="Wakebe H."/>
            <person name="Hishigaki H."/>
            <person name="Watanabe T."/>
            <person name="Sugiyama A."/>
            <person name="Takemoto M."/>
            <person name="Kawakami B."/>
            <person name="Yamazaki M."/>
            <person name="Watanabe K."/>
            <person name="Kumagai A."/>
            <person name="Itakura S."/>
            <person name="Fukuzumi Y."/>
            <person name="Fujimori Y."/>
            <person name="Komiyama M."/>
            <person name="Tashiro H."/>
            <person name="Tanigami A."/>
            <person name="Fujiwara T."/>
            <person name="Ono T."/>
            <person name="Yamada K."/>
            <person name="Fujii Y."/>
            <person name="Ozaki K."/>
            <person name="Hirao M."/>
            <person name="Ohmori Y."/>
            <person name="Kawabata A."/>
            <person name="Hikiji T."/>
            <person name="Kobatake N."/>
            <person name="Inagaki H."/>
            <person name="Ikema Y."/>
            <person name="Okamoto S."/>
            <person name="Okitani R."/>
            <person name="Kawakami T."/>
            <person name="Noguchi S."/>
            <person name="Itoh T."/>
            <person name="Shigeta K."/>
            <person name="Senba T."/>
            <person name="Matsumura K."/>
            <person name="Nakajima Y."/>
            <person name="Mizuno T."/>
            <person name="Morinaga M."/>
            <person name="Sasaki M."/>
            <person name="Togashi T."/>
            <person name="Oyama M."/>
            <person name="Hata H."/>
            <person name="Watanabe M."/>
            <person name="Komatsu T."/>
            <person name="Mizushima-Sugano J."/>
            <person name="Satoh T."/>
            <person name="Shirai Y."/>
            <person name="Takahashi Y."/>
            <person name="Nakagawa K."/>
            <person name="Okumura K."/>
            <person name="Nagase T."/>
            <person name="Nomura N."/>
            <person name="Kikuchi H."/>
            <person name="Masuho Y."/>
            <person name="Yamashita R."/>
            <person name="Nakai K."/>
            <person name="Yada T."/>
            <person name="Nakamura Y."/>
            <person name="Ohara O."/>
            <person name="Isogai T."/>
            <person name="Sugano S."/>
        </authorList>
    </citation>
    <scope>NUCLEOTIDE SEQUENCE [LARGE SCALE MRNA] (ISOFORMS 1 AND 2)</scope>
    <source>
        <tissue>Uterus</tissue>
    </source>
</reference>
<reference key="4">
    <citation type="journal article" date="2006" name="Nature">
        <title>DNA sequence and analysis of human chromosome 8.</title>
        <authorList>
            <person name="Nusbaum C."/>
            <person name="Mikkelsen T.S."/>
            <person name="Zody M.C."/>
            <person name="Asakawa S."/>
            <person name="Taudien S."/>
            <person name="Garber M."/>
            <person name="Kodira C.D."/>
            <person name="Schueler M.G."/>
            <person name="Shimizu A."/>
            <person name="Whittaker C.A."/>
            <person name="Chang J.L."/>
            <person name="Cuomo C.A."/>
            <person name="Dewar K."/>
            <person name="FitzGerald M.G."/>
            <person name="Yang X."/>
            <person name="Allen N.R."/>
            <person name="Anderson S."/>
            <person name="Asakawa T."/>
            <person name="Blechschmidt K."/>
            <person name="Bloom T."/>
            <person name="Borowsky M.L."/>
            <person name="Butler J."/>
            <person name="Cook A."/>
            <person name="Corum B."/>
            <person name="DeArellano K."/>
            <person name="DeCaprio D."/>
            <person name="Dooley K.T."/>
            <person name="Dorris L. III"/>
            <person name="Engels R."/>
            <person name="Gloeckner G."/>
            <person name="Hafez N."/>
            <person name="Hagopian D.S."/>
            <person name="Hall J.L."/>
            <person name="Ishikawa S.K."/>
            <person name="Jaffe D.B."/>
            <person name="Kamat A."/>
            <person name="Kudoh J."/>
            <person name="Lehmann R."/>
            <person name="Lokitsang T."/>
            <person name="Macdonald P."/>
            <person name="Major J.E."/>
            <person name="Matthews C.D."/>
            <person name="Mauceli E."/>
            <person name="Menzel U."/>
            <person name="Mihalev A.H."/>
            <person name="Minoshima S."/>
            <person name="Murayama Y."/>
            <person name="Naylor J.W."/>
            <person name="Nicol R."/>
            <person name="Nguyen C."/>
            <person name="O'Leary S.B."/>
            <person name="O'Neill K."/>
            <person name="Parker S.C.J."/>
            <person name="Polley A."/>
            <person name="Raymond C.K."/>
            <person name="Reichwald K."/>
            <person name="Rodriguez J."/>
            <person name="Sasaki T."/>
            <person name="Schilhabel M."/>
            <person name="Siddiqui R."/>
            <person name="Smith C.L."/>
            <person name="Sneddon T.P."/>
            <person name="Talamas J.A."/>
            <person name="Tenzin P."/>
            <person name="Topham K."/>
            <person name="Venkataraman V."/>
            <person name="Wen G."/>
            <person name="Yamazaki S."/>
            <person name="Young S.K."/>
            <person name="Zeng Q."/>
            <person name="Zimmer A.R."/>
            <person name="Rosenthal A."/>
            <person name="Birren B.W."/>
            <person name="Platzer M."/>
            <person name="Shimizu N."/>
            <person name="Lander E.S."/>
        </authorList>
    </citation>
    <scope>NUCLEOTIDE SEQUENCE [LARGE SCALE GENOMIC DNA]</scope>
</reference>
<reference key="5">
    <citation type="submission" date="2005-07" db="EMBL/GenBank/DDBJ databases">
        <authorList>
            <person name="Mural R.J."/>
            <person name="Istrail S."/>
            <person name="Sutton G.G."/>
            <person name="Florea L."/>
            <person name="Halpern A.L."/>
            <person name="Mobarry C.M."/>
            <person name="Lippert R."/>
            <person name="Walenz B."/>
            <person name="Shatkay H."/>
            <person name="Dew I."/>
            <person name="Miller J.R."/>
            <person name="Flanigan M.J."/>
            <person name="Edwards N.J."/>
            <person name="Bolanos R."/>
            <person name="Fasulo D."/>
            <person name="Halldorsson B.V."/>
            <person name="Hannenhalli S."/>
            <person name="Turner R."/>
            <person name="Yooseph S."/>
            <person name="Lu F."/>
            <person name="Nusskern D.R."/>
            <person name="Shue B.C."/>
            <person name="Zheng X.H."/>
            <person name="Zhong F."/>
            <person name="Delcher A.L."/>
            <person name="Huson D.H."/>
            <person name="Kravitz S.A."/>
            <person name="Mouchard L."/>
            <person name="Reinert K."/>
            <person name="Remington K.A."/>
            <person name="Clark A.G."/>
            <person name="Waterman M.S."/>
            <person name="Eichler E.E."/>
            <person name="Adams M.D."/>
            <person name="Hunkapiller M.W."/>
            <person name="Myers E.W."/>
            <person name="Venter J.C."/>
        </authorList>
    </citation>
    <scope>NUCLEOTIDE SEQUENCE [LARGE SCALE GENOMIC DNA]</scope>
</reference>
<reference key="6">
    <citation type="journal article" date="2004" name="Genome Res.">
        <title>The status, quality, and expansion of the NIH full-length cDNA project: the Mammalian Gene Collection (MGC).</title>
        <authorList>
            <consortium name="The MGC Project Team"/>
        </authorList>
    </citation>
    <scope>NUCLEOTIDE SEQUENCE [LARGE SCALE MRNA] (ISOFORM 1)</scope>
    <source>
        <tissue>Eye</tissue>
    </source>
</reference>
<reference key="7">
    <citation type="submission" date="2007-07" db="UniProtKB">
        <authorList>
            <person name="Bienvenut W.V."/>
            <person name="Matallanas D."/>
            <person name="Cooper W.N."/>
            <person name="Kolch W."/>
        </authorList>
    </citation>
    <scope>PROTEIN SEQUENCE OF 1-8; 13-43; 57-69; 85-91; 115-128; 133-141; 149-178; 229-256; 267-298; 329-338; 382-403; 423-451; 462-467 AND 474-485</scope>
    <scope>ACETYLATION AT MET-1</scope>
    <scope>IDENTIFICATION BY MASS SPECTROMETRY</scope>
    <source>
        <tissue>Mammary carcinoma</tissue>
    </source>
</reference>
<reference key="8">
    <citation type="journal article" date="1993" name="Cell Growth Differ.">
        <title>Identification of 21 novel human protein kinases, including 3 members of a family related to the cell cycle regulator nimA of Aspergillus nidulans.</title>
        <authorList>
            <person name="Schultz S.J."/>
            <person name="Nigg E.A."/>
        </authorList>
    </citation>
    <scope>NUCLEOTIDE SEQUENCE [MRNA] OF 96-203</scope>
</reference>
<reference key="9">
    <citation type="journal article" date="2001" name="J. Biol. Chem.">
        <title>MST, a physiological caspase substrate, highly sensitizes apoptosis both upstream and downstream of caspase activation.</title>
        <authorList>
            <person name="Lee K.-K."/>
            <person name="Ohyama T."/>
            <person name="Yajima N."/>
            <person name="Tsubuki S."/>
            <person name="Yonehara S."/>
        </authorList>
    </citation>
    <scope>SUBCELLULAR LOCATION</scope>
    <scope>PROTEOLYTIC PROCESSING</scope>
    <scope>MUTAGENESIS OF ASP-322</scope>
</reference>
<reference key="10">
    <citation type="journal article" date="2004" name="Science">
        <title>Role of the kinase MST2 in suppression of apoptosis by the proto-oncogene product Raf-1.</title>
        <authorList>
            <person name="O'Neill E."/>
            <person name="Rushworth L."/>
            <person name="Baccarini M."/>
            <person name="Kolch W."/>
        </authorList>
    </citation>
    <scope>INTERACTION WITH RAF1</scope>
    <scope>ACTIVITY REGULATION</scope>
</reference>
<reference key="11">
    <citation type="journal article" date="2005" name="Oncogene">
        <title>The Ste20-like kinase Mst2 activates the human large tumor suppressor kinase Lats1.</title>
        <authorList>
            <person name="Chan E.H.Y."/>
            <person name="Nousiainen M."/>
            <person name="Chalamalasetty R.B."/>
            <person name="Schaefer A."/>
            <person name="Nigg E.A."/>
            <person name="Sillje H.H.W."/>
        </authorList>
    </citation>
    <scope>INTERACTION WITH SAV1</scope>
    <scope>FUNCTION</scope>
    <scope>CATALYTIC ACTIVITY</scope>
</reference>
<reference key="12">
    <citation type="journal article" date="2006" name="Cancer Res.">
        <title>Role of the tumor suppressor RASSF1A in Mst1-mediated apoptosis.</title>
        <authorList>
            <person name="Oh H.J."/>
            <person name="Lee K.-K."/>
            <person name="Song S.J."/>
            <person name="Jin M.S."/>
            <person name="Song M.S."/>
            <person name="Lee J.H."/>
            <person name="Im C.R."/>
            <person name="Lee J.-O."/>
            <person name="Yonehara S."/>
            <person name="Lim D.-S."/>
        </authorList>
    </citation>
    <scope>INTERACTION WITH RASSF1</scope>
</reference>
<reference key="13">
    <citation type="journal article" date="2006" name="FEBS J.">
        <title>Association of mammalian sterile twenty kinases, Mst1 and Mst2, with hSalvador via C-terminal coiled-coil domains, leads to its stabilization and phosphorylation.</title>
        <authorList>
            <person name="Callus B.A."/>
            <person name="Verhagen A.M."/>
            <person name="Vaux D.L."/>
        </authorList>
    </citation>
    <scope>FUNCTION</scope>
    <scope>INTERACTION WITH SAV1</scope>
    <scope>MUTAGENESIS OF LYS-56</scope>
</reference>
<reference key="14">
    <citation type="journal article" date="2008" name="Curr. Biol.">
        <title>MOBKL1A/MOBKL1B phosphorylation by MST1 and MST2 inhibits cell proliferation.</title>
        <authorList>
            <person name="Praskova M."/>
            <person name="Xia F."/>
            <person name="Avruch J."/>
        </authorList>
    </citation>
    <scope>FUNCTION</scope>
    <scope>INDUCTION</scope>
</reference>
<reference key="15">
    <citation type="journal article" date="2008" name="Mol. Cell">
        <title>Kinase-selective enrichment enables quantitative phosphoproteomics of the kinome across the cell cycle.</title>
        <authorList>
            <person name="Daub H."/>
            <person name="Olsen J.V."/>
            <person name="Bairlein M."/>
            <person name="Gnad F."/>
            <person name="Oppermann F.S."/>
            <person name="Korner R."/>
            <person name="Greff Z."/>
            <person name="Keri G."/>
            <person name="Stemmann O."/>
            <person name="Mann M."/>
        </authorList>
    </citation>
    <scope>PHOSPHORYLATION [LARGE SCALE ANALYSIS] AT SER-316 AND SER-444</scope>
    <scope>IDENTIFICATION BY MASS SPECTROMETRY [LARGE SCALE ANALYSIS]</scope>
    <source>
        <tissue>Cervix carcinoma</tissue>
    </source>
</reference>
<reference key="16">
    <citation type="journal article" date="2008" name="Oncogene">
        <title>Threonine 74 of MOB1 is a putative key phosphorylation site by MST2 to form the scaffold to activate nuclear Dbf2-related kinase 1.</title>
        <authorList>
            <person name="Hirabayashi S."/>
            <person name="Nakagawa K."/>
            <person name="Sumita K."/>
            <person name="Hidaka S."/>
            <person name="Kawai T."/>
            <person name="Ikeda M."/>
            <person name="Kawata A."/>
            <person name="Ohno K."/>
            <person name="Hata Y."/>
        </authorList>
    </citation>
    <scope>FUNCTION</scope>
    <scope>INTERACTION WITH STK38 AND MOBKL1B</scope>
</reference>
<reference key="17">
    <citation type="journal article" date="2008" name="Proc. Natl. Acad. Sci. U.S.A.">
        <title>A quantitative atlas of mitotic phosphorylation.</title>
        <authorList>
            <person name="Dephoure N."/>
            <person name="Zhou C."/>
            <person name="Villen J."/>
            <person name="Beausoleil S.A."/>
            <person name="Bakalarski C.E."/>
            <person name="Elledge S.J."/>
            <person name="Gygi S.P."/>
        </authorList>
    </citation>
    <scope>PHOSPHORYLATION [LARGE SCALE ANALYSIS] AT SER-316</scope>
    <scope>IDENTIFICATION BY MASS SPECTROMETRY [LARGE SCALE ANALYSIS]</scope>
    <source>
        <tissue>Cervix carcinoma</tissue>
    </source>
</reference>
<reference key="18">
    <citation type="journal article" date="2009" name="Anal. Chem.">
        <title>Lys-N and trypsin cover complementary parts of the phosphoproteome in a refined SCX-based approach.</title>
        <authorList>
            <person name="Gauci S."/>
            <person name="Helbig A.O."/>
            <person name="Slijper M."/>
            <person name="Krijgsveld J."/>
            <person name="Heck A.J."/>
            <person name="Mohammed S."/>
        </authorList>
    </citation>
    <scope>ACETYLATION [LARGE SCALE ANALYSIS] AT MET-1</scope>
    <scope>IDENTIFICATION BY MASS SPECTROMETRY [LARGE SCALE ANALYSIS]</scope>
</reference>
<reference key="19">
    <citation type="journal article" date="2009" name="BioFactors">
        <title>Mammalian NDR/LATS protein kinases in hippo tumor suppressor signaling.</title>
        <authorList>
            <person name="Hergovich A."/>
            <person name="Hemmings B.A."/>
        </authorList>
    </citation>
    <scope>REVIEW</scope>
</reference>
<reference key="20">
    <citation type="journal article" date="2009" name="Mol. Cell. Proteomics">
        <title>Large-scale proteomics analysis of the human kinome.</title>
        <authorList>
            <person name="Oppermann F.S."/>
            <person name="Gnad F."/>
            <person name="Olsen J.V."/>
            <person name="Hornberger R."/>
            <person name="Greff Z."/>
            <person name="Keri G."/>
            <person name="Mann M."/>
            <person name="Daub H."/>
        </authorList>
    </citation>
    <scope>PHOSPHORYLATION [LARGE SCALE ANALYSIS] AT SER-15; SER-316; THR-336 AND SER-444</scope>
    <scope>IDENTIFICATION BY MASS SPECTROMETRY [LARGE SCALE ANALYSIS]</scope>
</reference>
<reference key="21">
    <citation type="journal article" date="2009" name="Oncogene">
        <title>RASSF2 associates with and stabilizes the proapoptotic kinase MST2.</title>
        <authorList>
            <person name="Cooper W.N."/>
            <person name="Hesson L.B."/>
            <person name="Matallanas D."/>
            <person name="Dallol A."/>
            <person name="von Kriegsheim A."/>
            <person name="Ward R."/>
            <person name="Kolch W."/>
            <person name="Latif F."/>
        </authorList>
    </citation>
    <scope>FUNCTION</scope>
    <scope>INTERACTION WITH RASSF2</scope>
    <scope>SUBCELLULAR LOCATION</scope>
</reference>
<reference key="22">
    <citation type="journal article" date="2009" name="Sci. Signal.">
        <title>Quantitative phosphoproteomic analysis of T cell receptor signaling reveals system-wide modulation of protein-protein interactions.</title>
        <authorList>
            <person name="Mayya V."/>
            <person name="Lundgren D.H."/>
            <person name="Hwang S.-I."/>
            <person name="Rezaul K."/>
            <person name="Wu L."/>
            <person name="Eng J.K."/>
            <person name="Rodionov V."/>
            <person name="Han D.K."/>
        </authorList>
    </citation>
    <scope>PHOSPHORYLATION [LARGE SCALE ANALYSIS] AT SER-316</scope>
    <scope>IDENTIFICATION BY MASS SPECTROMETRY [LARGE SCALE ANALYSIS]</scope>
    <source>
        <tissue>Leukemic T-cell</tissue>
    </source>
</reference>
<reference key="23">
    <citation type="journal article" date="2010" name="Cancer Res.">
        <title>Proapoptotic kinase MST2 coordinates signaling crosstalk between RASSF1A, Raf-1, and Akt.</title>
        <authorList>
            <person name="Romano D."/>
            <person name="Matallanas D."/>
            <person name="Weitsman G."/>
            <person name="Preisinger C."/>
            <person name="Ng T."/>
            <person name="Kolch W."/>
        </authorList>
    </citation>
    <scope>PHOSPHORYLATION AT THR-117 AND THR-384</scope>
    <scope>INTERACTION WITH PKB/AKT1</scope>
</reference>
<reference key="24">
    <citation type="journal article" date="2010" name="Dev. Cell">
        <title>The Crumbs complex couples cell density sensing to Hippo-dependent control of the TGF-beta-SMAD pathway.</title>
        <authorList>
            <person name="Varelas X."/>
            <person name="Samavarchi-Tehrani P."/>
            <person name="Narimatsu M."/>
            <person name="Weiss A."/>
            <person name="Cockburn K."/>
            <person name="Larsen B.G."/>
            <person name="Rossant J."/>
            <person name="Wrana J.L."/>
        </authorList>
    </citation>
    <scope>SUBCELLULAR LOCATION</scope>
</reference>
<reference key="25">
    <citation type="journal article" date="2010" name="J. Biol. Chem.">
        <title>Mammalian Ste20-like kinase (Mst2) indirectly supports Raf-1/ERK pathway activity via maintenance of protein phosphatase-2A catalytic subunit levels and consequent suppression of inhibitory Raf-1 phosphorylation.</title>
        <authorList>
            <person name="Kilili G.K."/>
            <person name="Kyriakis J.M."/>
        </authorList>
    </citation>
    <scope>FUNCTION</scope>
</reference>
<reference key="26">
    <citation type="journal article" date="2010" name="Nat. Cell Biol.">
        <title>Components of the Hippo pathway cooperate with Nek2 kinase to regulate centrosome disjunction.</title>
        <authorList>
            <person name="Mardin B.R."/>
            <person name="Lange C."/>
            <person name="Baxter J.E."/>
            <person name="Hardy T."/>
            <person name="Scholz S.R."/>
            <person name="Fry A.M."/>
            <person name="Schiebel E."/>
        </authorList>
    </citation>
    <scope>FUNCTION</scope>
    <scope>INTERACTION WITH NEK2</scope>
</reference>
<reference key="27">
    <citation type="journal article" date="2010" name="PLoS ONE">
        <title>Regulation of proapoptotic mammalian ste20-like kinase MST2 by the IGF1-Akt pathway.</title>
        <authorList>
            <person name="Kim D."/>
            <person name="Shu S."/>
            <person name="Coppola M.D."/>
            <person name="Kaneko S."/>
            <person name="Yuan Z.Q."/>
            <person name="Cheng J.Q."/>
        </authorList>
    </citation>
    <scope>RETRACTED PAPER</scope>
</reference>
<reference key="28">
    <citation type="journal article" date="2023" name="PLoS ONE">
        <title>Retraction: Regulation of Proapoptotic Mammalian ste20-Like Kinase MST2 by the IGF1-Akt Pathway.</title>
        <authorList>
            <consortium name="PLOS ONE Editors"/>
        </authorList>
    </citation>
    <scope>CAUTION</scope>
    <scope>RETRACTION NOTICE OF PUBMED:20231902</scope>
</reference>
<reference key="29">
    <citation type="journal article" date="2011" name="BMC Syst. Biol.">
        <title>Initial characterization of the human central proteome.</title>
        <authorList>
            <person name="Burkard T.R."/>
            <person name="Planyavsky M."/>
            <person name="Kaupe I."/>
            <person name="Breitwieser F.P."/>
            <person name="Buerckstuemmer T."/>
            <person name="Bennett K.L."/>
            <person name="Superti-Furga G."/>
            <person name="Colinge J."/>
        </authorList>
    </citation>
    <scope>IDENTIFICATION BY MASS SPECTROMETRY [LARGE SCALE ANALYSIS]</scope>
</reference>
<reference key="30">
    <citation type="journal article" date="2011" name="J. Biol. Chem.">
        <title>The tumor suppressor RASSF1A prevents dephosphorylation of the mammalian STE20-like kinases MST1 and MST2.</title>
        <authorList>
            <person name="Guo C."/>
            <person name="Zhang X."/>
            <person name="Pfeifer G.P."/>
        </authorList>
    </citation>
    <scope>INTERACTION WITH RASSF1</scope>
    <scope>ACTIVITY REGULATION</scope>
</reference>
<reference key="31">
    <citation type="journal article" date="2011" name="Curr. Biol.">
        <title>Plk1 controls the Nek2A-PP1gamma antagonism in centrosome disjunction.</title>
        <authorList>
            <person name="Mardin B.R."/>
            <person name="Agircan F.G."/>
            <person name="Lange C."/>
            <person name="Schiebel E."/>
        </authorList>
    </citation>
    <scope>FUNCTION</scope>
    <scope>PHOSPHORYLATION AT SER-15</scope>
</reference>
<reference key="32">
    <citation type="journal article" date="2011" name="J. Mol. Med.">
        <title>Mammalian MST2 kinase and human Salvador activate and reduce estrogen receptor alpha in the absence of ligand.</title>
        <authorList>
            <person name="Park Y."/>
            <person name="Park J."/>
            <person name="Lee Y."/>
            <person name="Lim W."/>
            <person name="Oh B.C."/>
            <person name="Shin C."/>
            <person name="Kim W."/>
            <person name="Lee Y."/>
        </authorList>
    </citation>
    <scope>FUNCTION</scope>
    <scope>INTERACTION WITH ESR1</scope>
</reference>
<reference key="33">
    <citation type="journal article" date="2011" name="Sci. Signal.">
        <title>System-wide temporal characterization of the proteome and phosphoproteome of human embryonic stem cell differentiation.</title>
        <authorList>
            <person name="Rigbolt K.T."/>
            <person name="Prokhorova T.A."/>
            <person name="Akimov V."/>
            <person name="Henningsen J."/>
            <person name="Johansen P.T."/>
            <person name="Kratchmarova I."/>
            <person name="Kassem M."/>
            <person name="Mann M."/>
            <person name="Olsen J.V."/>
            <person name="Blagoev B."/>
        </authorList>
    </citation>
    <scope>PHOSPHORYLATION [LARGE SCALE ANALYSIS] AT SER-316</scope>
    <scope>IDENTIFICATION BY MASS SPECTROMETRY [LARGE SCALE ANALYSIS]</scope>
</reference>
<reference key="34">
    <citation type="journal article" date="2013" name="J. Proteome Res.">
        <title>Toward a comprehensive characterization of a human cancer cell phosphoproteome.</title>
        <authorList>
            <person name="Zhou H."/>
            <person name="Di Palma S."/>
            <person name="Preisinger C."/>
            <person name="Peng M."/>
            <person name="Polat A.N."/>
            <person name="Heck A.J."/>
            <person name="Mohammed S."/>
        </authorList>
    </citation>
    <scope>PHOSPHORYLATION [LARGE SCALE ANALYSIS] AT SER-316; THR-336 AND SER-385</scope>
    <scope>IDENTIFICATION BY MASS SPECTROMETRY [LARGE SCALE ANALYSIS]</scope>
    <source>
        <tissue>Cervix carcinoma</tissue>
        <tissue>Erythroleukemia</tissue>
    </source>
</reference>
<reference key="35">
    <citation type="journal article" date="2016" name="Genes Dev.">
        <title>DLG5 connects cell polarity and Hippo signaling protein networks by linking PAR-1 with MST1/2.</title>
        <authorList>
            <person name="Kwan J."/>
            <person name="Sczaniecka A."/>
            <person name="Arash E.H."/>
            <person name="Nguyen L."/>
            <person name="Chen C.C."/>
            <person name="Ratkovic S."/>
            <person name="Klezovitch O."/>
            <person name="Attisano L."/>
            <person name="McNeill H."/>
            <person name="Emili A."/>
            <person name="Vasioukhin V."/>
        </authorList>
    </citation>
    <scope>FUNCTION</scope>
    <scope>INTERACTION WITH LATS1; SAV1; MARK3 AND DLG5</scope>
</reference>
<reference key="36">
    <citation type="journal article" date="2023" name="Nucleic Acids Res.">
        <title>The TRIM69-MST2 signaling axis regulates centrosome dynamics and chromosome segregation.</title>
        <authorList>
            <person name="Wang Y."/>
            <person name="Risteski P."/>
            <person name="Yang Y."/>
            <person name="Chen H."/>
            <person name="Droby G."/>
            <person name="Walens A."/>
            <person name="Jayaprakash D."/>
            <person name="Troester M."/>
            <person name="Herring L."/>
            <person name="Chernoff J."/>
            <person name="Tolic I.M."/>
            <person name="Bowser J."/>
            <person name="Vaziri C."/>
        </authorList>
    </citation>
    <scope>SUBCELLULAR LOCATION</scope>
    <scope>UBIQUITINATION BY TRIM69</scope>
</reference>
<reference key="37">
    <citation type="journal article" date="2019" name="Cell Discov.">
        <title>Architecture, substructures, and dynamic assembly of STRIPAK complexes in Hippo signaling.</title>
        <authorList>
            <person name="Tang Y."/>
            <person name="Chen M."/>
            <person name="Zhou L."/>
            <person name="Ma J."/>
            <person name="Li Y."/>
            <person name="Zhang H."/>
            <person name="Shi Z."/>
            <person name="Xu Q."/>
            <person name="Zhang X."/>
            <person name="Gao Z."/>
            <person name="Zhao Y."/>
            <person name="Cheng Y."/>
            <person name="Jiao S."/>
            <person name="Zhou Z."/>
        </authorList>
    </citation>
    <scope>PHOSPHORYLATION</scope>
    <scope>FUNCTION</scope>
    <scope>ASSOCIATION WITH THE STRIPAK COMPLEX</scope>
    <scope>INTERACTION WITH SLMAP AND STRN3</scope>
    <scope>MUTAGENESIS OF LYS-56</scope>
</reference>
<reference evidence="38 39" key="38">
    <citation type="journal article" date="2013" name="Structure">
        <title>Structural basis for autoactivation of human Mst2 kinase and its regulation by RASSF5.</title>
        <authorList>
            <person name="Ni L."/>
            <person name="Li S."/>
            <person name="Yu J."/>
            <person name="Min J."/>
            <person name="Brautigam C.A."/>
            <person name="Tomchick D.R."/>
            <person name="Pan D."/>
            <person name="Luo X."/>
        </authorList>
    </citation>
    <scope>X-RAY CRYSTALLOGRAPHY (2.42 ANGSTROMS) OF 16-313</scope>
    <scope>PHOSPHORYLATION AT THR-174 AND THR-180</scope>
    <scope>MUTAGENESIS OF THR-174 AND THR-180</scope>
    <scope>FUNCTION</scope>
    <scope>INTERACTION WITH RASSF5</scope>
</reference>
<reference evidence="40 41" key="39">
    <citation type="journal article" date="2017" name="Elife">
        <title>SAV1 promotes Hippo kinase activation through antagonizing the PP2A phosphatase STRIPAK.</title>
        <authorList>
            <person name="Bae S.J."/>
            <person name="Ni L."/>
            <person name="Osinski A."/>
            <person name="Tomchick D.R."/>
            <person name="Brautigam C.A."/>
            <person name="Luo X."/>
        </authorList>
    </citation>
    <scope>X-RAY CRYSTALLOGRAPHY (2.96 ANGSTROMS) OF 16-491 IN COMPLEX WITH SAV1 OR SLMAP</scope>
    <scope>FUNCTION</scope>
    <scope>INTERACTION WITH SAV1</scope>
    <scope>PHOSPHORYLATION AT THR-180; THR-336 AND THR-378</scope>
    <scope>ACTIVITY REGULATION</scope>
    <scope>MUTAGENESIS OF ASP-146 AND THR-180</scope>
    <scope>SUBCELLULAR LOCATION</scope>
</reference>
<reference key="40">
    <citation type="journal article" date="2007" name="Nature">
        <title>Patterns of somatic mutation in human cancer genomes.</title>
        <authorList>
            <person name="Greenman C."/>
            <person name="Stephens P."/>
            <person name="Smith R."/>
            <person name="Dalgliesh G.L."/>
            <person name="Hunter C."/>
            <person name="Bignell G."/>
            <person name="Davies H."/>
            <person name="Teague J."/>
            <person name="Butler A."/>
            <person name="Stevens C."/>
            <person name="Edkins S."/>
            <person name="O'Meara S."/>
            <person name="Vastrik I."/>
            <person name="Schmidt E.E."/>
            <person name="Avis T."/>
            <person name="Barthorpe S."/>
            <person name="Bhamra G."/>
            <person name="Buck G."/>
            <person name="Choudhury B."/>
            <person name="Clements J."/>
            <person name="Cole J."/>
            <person name="Dicks E."/>
            <person name="Forbes S."/>
            <person name="Gray K."/>
            <person name="Halliday K."/>
            <person name="Harrison R."/>
            <person name="Hills K."/>
            <person name="Hinton J."/>
            <person name="Jenkinson A."/>
            <person name="Jones D."/>
            <person name="Menzies A."/>
            <person name="Mironenko T."/>
            <person name="Perry J."/>
            <person name="Raine K."/>
            <person name="Richardson D."/>
            <person name="Shepherd R."/>
            <person name="Small A."/>
            <person name="Tofts C."/>
            <person name="Varian J."/>
            <person name="Webb T."/>
            <person name="West S."/>
            <person name="Widaa S."/>
            <person name="Yates A."/>
            <person name="Cahill D.P."/>
            <person name="Louis D.N."/>
            <person name="Goldstraw P."/>
            <person name="Nicholson A.G."/>
            <person name="Brasseur F."/>
            <person name="Looijenga L."/>
            <person name="Weber B.L."/>
            <person name="Chiew Y.-E."/>
            <person name="DeFazio A."/>
            <person name="Greaves M.F."/>
            <person name="Green A.R."/>
            <person name="Campbell P."/>
            <person name="Birney E."/>
            <person name="Easton D.F."/>
            <person name="Chenevix-Trench G."/>
            <person name="Tan M.-H."/>
            <person name="Khoo S.K."/>
            <person name="Teh B.T."/>
            <person name="Yuen S.T."/>
            <person name="Leung S.Y."/>
            <person name="Wooster R."/>
            <person name="Futreal P.A."/>
            <person name="Stratton M.R."/>
        </authorList>
    </citation>
    <scope>VARIANT [LARGE SCALE ANALYSIS] LEU-60</scope>
</reference>
<feature type="chain" id="PRO_0000086689" description="Serine/threonine-protein kinase 3">
    <location>
        <begin position="1"/>
        <end position="491"/>
    </location>
</feature>
<feature type="chain" id="PRO_0000413713" description="Serine/threonine-protein kinase 3 36kDa subunit">
    <location>
        <begin position="1"/>
        <end position="322"/>
    </location>
</feature>
<feature type="chain" id="PRO_0000413714" description="Serine/threonine-protein kinase 3 20kDa subunit">
    <location>
        <begin position="323"/>
        <end position="491"/>
    </location>
</feature>
<feature type="domain" description="Protein kinase" evidence="4">
    <location>
        <begin position="27"/>
        <end position="278"/>
    </location>
</feature>
<feature type="domain" description="SARAH" evidence="5">
    <location>
        <begin position="437"/>
        <end position="484"/>
    </location>
</feature>
<feature type="region of interest" description="Disordered" evidence="6">
    <location>
        <begin position="301"/>
        <end position="327"/>
    </location>
</feature>
<feature type="region of interest" description="Disordered" evidence="6">
    <location>
        <begin position="370"/>
        <end position="392"/>
    </location>
</feature>
<feature type="coiled-coil region" evidence="3">
    <location>
        <begin position="287"/>
        <end position="328"/>
    </location>
</feature>
<feature type="coiled-coil region" evidence="3">
    <location>
        <begin position="442"/>
        <end position="475"/>
    </location>
</feature>
<feature type="compositionally biased region" description="Acidic residues" evidence="6">
    <location>
        <begin position="309"/>
        <end position="321"/>
    </location>
</feature>
<feature type="compositionally biased region" description="Polar residues" evidence="6">
    <location>
        <begin position="381"/>
        <end position="390"/>
    </location>
</feature>
<feature type="active site" description="Proton acceptor" evidence="4">
    <location>
        <position position="146"/>
    </location>
</feature>
<feature type="binding site" evidence="4">
    <location>
        <begin position="33"/>
        <end position="41"/>
    </location>
    <ligand>
        <name>ATP</name>
        <dbReference type="ChEBI" id="CHEBI:30616"/>
    </ligand>
</feature>
<feature type="binding site">
    <location>
        <position position="56"/>
    </location>
    <ligand>
        <name>ATP</name>
        <dbReference type="ChEBI" id="CHEBI:30616"/>
    </ligand>
</feature>
<feature type="binding site" evidence="25 40">
    <location>
        <position position="151"/>
    </location>
    <ligand>
        <name>Mg(2+)</name>
        <dbReference type="ChEBI" id="CHEBI:18420"/>
    </ligand>
</feature>
<feature type="binding site" evidence="25 40">
    <location>
        <position position="164"/>
    </location>
    <ligand>
        <name>Mg(2+)</name>
        <dbReference type="ChEBI" id="CHEBI:18420"/>
    </ligand>
</feature>
<feature type="site" description="Cleavage; by caspase-3">
    <location>
        <begin position="322"/>
        <end position="323"/>
    </location>
</feature>
<feature type="modified residue" description="N-acetylmethionine" evidence="30 45">
    <location>
        <position position="1"/>
    </location>
</feature>
<feature type="modified residue" description="Phosphoserine; by PLK1" evidence="22 44">
    <location>
        <position position="15"/>
    </location>
</feature>
<feature type="modified residue" description="Phosphothreonine; by PKB/AKT1" evidence="16">
    <location>
        <position position="117"/>
    </location>
</feature>
<feature type="modified residue" description="Phosphothreonine; by autocatalysis" evidence="23">
    <location>
        <position position="174"/>
    </location>
</feature>
<feature type="modified residue" description="Phosphothreonine; by autocatalysis" evidence="23 25">
    <location>
        <position position="180"/>
    </location>
</feature>
<feature type="modified residue" description="Phosphoserine" evidence="42 43 44 46 47 48">
    <location>
        <position position="316"/>
    </location>
</feature>
<feature type="modified residue" description="Phosphothreonine; by autocatalysis" evidence="25">
    <location>
        <position position="336"/>
    </location>
</feature>
<feature type="modified residue" description="Phosphothreonine; by autocatalysis" evidence="25 44 48">
    <location>
        <position position="378"/>
    </location>
</feature>
<feature type="modified residue" description="Phosphothreonine; by PKB/AKT1" evidence="16">
    <location>
        <position position="384"/>
    </location>
</feature>
<feature type="modified residue" description="Phosphoserine" evidence="48">
    <location>
        <position position="385"/>
    </location>
</feature>
<feature type="modified residue" description="Phosphoserine" evidence="43 44">
    <location>
        <position position="444"/>
    </location>
</feature>
<feature type="splice variant" id="VSP_054167" description="In isoform 2." evidence="31">
    <original>MEQPPAPK</original>
    <variation>MLQLMDSGITICLRNGAASVFKKKEWSTQGEENKQD</variation>
    <location>
        <begin position="1"/>
        <end position="8"/>
    </location>
</feature>
<feature type="sequence variant" id="VAR_041122" description="In an ovarian clear cell carcinoma sample; somatic mutation." evidence="12">
    <original>V</original>
    <variation>L</variation>
    <location>
        <position position="60"/>
    </location>
</feature>
<feature type="sequence variant" id="VAR_051670" description="In dbSNP:rs36047674.">
    <original>F</original>
    <variation>C</variation>
    <location>
        <position position="418"/>
    </location>
</feature>
<feature type="mutagenesis site" description="Loss of kinase activity. Loss of interaction with components of the STRIPAK complex." evidence="11 26">
    <original>K</original>
    <variation>R</variation>
    <location>
        <position position="56"/>
    </location>
</feature>
<feature type="mutagenesis site" description="Loss of kinase activity." evidence="25">
    <original>D</original>
    <variation>N</variation>
    <location>
        <position position="146"/>
    </location>
</feature>
<feature type="mutagenesis site" description="Fully active." evidence="23">
    <original>T</original>
    <variation>A</variation>
    <location>
        <position position="174"/>
    </location>
</feature>
<feature type="mutagenesis site" description="Loss of kinase activity. Loss of interaction with SLMAP." evidence="23 25">
    <original>T</original>
    <variation>A</variation>
    <location>
        <position position="180"/>
    </location>
</feature>
<feature type="mutagenesis site" description="Resistant to proteolytic cleavage." evidence="7">
    <original>D</original>
    <variation>N</variation>
    <location>
        <position position="322"/>
    </location>
</feature>
<feature type="sequence conflict" description="In Ref. 8; CAA80909." evidence="34" ref="8">
    <original>WIV</original>
    <variation>YLY</variation>
    <location>
        <begin position="96"/>
        <end position="98"/>
    </location>
</feature>
<feature type="sequence conflict" description="In Ref. 8; CAA80909." evidence="34" ref="8">
    <original>D</original>
    <variation>Y</variation>
    <location>
        <position position="121"/>
    </location>
</feature>
<feature type="sequence conflict" description="In Ref. 8; CAA80909." evidence="34" ref="8">
    <original>D</original>
    <variation>G</variation>
    <location>
        <position position="203"/>
    </location>
</feature>
<feature type="sequence conflict" description="In Ref. 1; AAC50386." evidence="34" ref="1">
    <original>E</original>
    <variation>D</variation>
    <location>
        <position position="303"/>
    </location>
</feature>
<feature type="sequence conflict" description="In Ref. 1; AAC50386." evidence="34" ref="1">
    <original>ESV</original>
    <variation>GEC</variation>
    <location>
        <begin position="332"/>
        <end position="334"/>
    </location>
</feature>
<feature type="helix" evidence="51">
    <location>
        <begin position="17"/>
        <end position="20"/>
    </location>
</feature>
<feature type="helix" evidence="55">
    <location>
        <begin position="23"/>
        <end position="26"/>
    </location>
</feature>
<feature type="strand" evidence="55">
    <location>
        <begin position="27"/>
        <end position="32"/>
    </location>
</feature>
<feature type="strand" evidence="54">
    <location>
        <begin position="36"/>
        <end position="39"/>
    </location>
</feature>
<feature type="strand" evidence="55">
    <location>
        <begin position="41"/>
        <end position="46"/>
    </location>
</feature>
<feature type="turn" evidence="55">
    <location>
        <begin position="47"/>
        <end position="49"/>
    </location>
</feature>
<feature type="strand" evidence="55">
    <location>
        <begin position="52"/>
        <end position="58"/>
    </location>
</feature>
<feature type="helix" evidence="55">
    <location>
        <begin position="64"/>
        <end position="75"/>
    </location>
</feature>
<feature type="strand" evidence="55">
    <location>
        <begin position="85"/>
        <end position="91"/>
    </location>
</feature>
<feature type="strand" evidence="55">
    <location>
        <begin position="94"/>
        <end position="100"/>
    </location>
</feature>
<feature type="strand" evidence="53">
    <location>
        <begin position="103"/>
        <end position="106"/>
    </location>
</feature>
<feature type="helix" evidence="55">
    <location>
        <begin position="107"/>
        <end position="114"/>
    </location>
</feature>
<feature type="helix" evidence="55">
    <location>
        <begin position="120"/>
        <end position="139"/>
    </location>
</feature>
<feature type="helix" evidence="55">
    <location>
        <begin position="149"/>
        <end position="151"/>
    </location>
</feature>
<feature type="strand" evidence="55">
    <location>
        <begin position="152"/>
        <end position="154"/>
    </location>
</feature>
<feature type="strand" evidence="55">
    <location>
        <begin position="160"/>
        <end position="162"/>
    </location>
</feature>
<feature type="helix" evidence="50">
    <location>
        <begin position="170"/>
        <end position="172"/>
    </location>
</feature>
<feature type="helix" evidence="50">
    <location>
        <begin position="175"/>
        <end position="182"/>
    </location>
</feature>
<feature type="helix" evidence="55">
    <location>
        <begin position="185"/>
        <end position="187"/>
    </location>
</feature>
<feature type="helix" evidence="55">
    <location>
        <begin position="190"/>
        <end position="193"/>
    </location>
</feature>
<feature type="helix" evidence="55">
    <location>
        <begin position="202"/>
        <end position="216"/>
    </location>
</feature>
<feature type="turn" evidence="55">
    <location>
        <begin position="220"/>
        <end position="223"/>
    </location>
</feature>
<feature type="helix" evidence="55">
    <location>
        <begin position="226"/>
        <end position="232"/>
    </location>
</feature>
<feature type="turn" evidence="55">
    <location>
        <begin position="233"/>
        <end position="235"/>
    </location>
</feature>
<feature type="helix" evidence="55">
    <location>
        <begin position="244"/>
        <end position="246"/>
    </location>
</feature>
<feature type="helix" evidence="55">
    <location>
        <begin position="249"/>
        <end position="258"/>
    </location>
</feature>
<feature type="helix" evidence="55">
    <location>
        <begin position="263"/>
        <end position="265"/>
    </location>
</feature>
<feature type="helix" evidence="55">
    <location>
        <begin position="269"/>
        <end position="272"/>
    </location>
</feature>
<feature type="helix" evidence="55">
    <location>
        <begin position="276"/>
        <end position="279"/>
    </location>
</feature>
<feature type="helix" evidence="55">
    <location>
        <begin position="284"/>
        <end position="287"/>
    </location>
</feature>
<feature type="helix" evidence="55">
    <location>
        <begin position="288"/>
        <end position="302"/>
    </location>
</feature>
<feature type="turn" evidence="54">
    <location>
        <begin position="308"/>
        <end position="311"/>
    </location>
</feature>
<feature type="strand" evidence="52">
    <location>
        <begin position="379"/>
        <end position="381"/>
    </location>
</feature>
<feature type="helix" evidence="52">
    <location>
        <begin position="392"/>
        <end position="394"/>
    </location>
</feature>
<feature type="turn" evidence="52">
    <location>
        <begin position="395"/>
        <end position="397"/>
    </location>
</feature>
<feature type="helix" evidence="49">
    <location>
        <begin position="436"/>
        <end position="440"/>
    </location>
</feature>
<feature type="helix" evidence="49">
    <location>
        <begin position="445"/>
        <end position="483"/>
    </location>
</feature>
<gene>
    <name evidence="37" type="primary">STK3</name>
    <name evidence="33" type="synonym">KRS1</name>
    <name evidence="32" type="synonym">MST2</name>
</gene>
<name>STK3_HUMAN</name>
<protein>
    <recommendedName>
        <fullName>Serine/threonine-protein kinase 3</fullName>
        <ecNumber evidence="9">2.7.11.1</ecNumber>
    </recommendedName>
    <alternativeName>
        <fullName>Mammalian STE20-like protein kinase 2</fullName>
        <shortName>MST-2</shortName>
    </alternativeName>
    <alternativeName>
        <fullName>STE20-like kinase MST2</fullName>
    </alternativeName>
    <alternativeName>
        <fullName>Serine/threonine-protein kinase Krs-1</fullName>
    </alternativeName>
    <component>
        <recommendedName>
            <fullName>Serine/threonine-protein kinase 3 36kDa subunit</fullName>
            <shortName>MST2/N</shortName>
        </recommendedName>
    </component>
    <component>
        <recommendedName>
            <fullName>Serine/threonine-protein kinase 3 20kDa subunit</fullName>
            <shortName>MST2/C</shortName>
        </recommendedName>
    </component>
</protein>
<organism>
    <name type="scientific">Homo sapiens</name>
    <name type="common">Human</name>
    <dbReference type="NCBI Taxonomy" id="9606"/>
    <lineage>
        <taxon>Eukaryota</taxon>
        <taxon>Metazoa</taxon>
        <taxon>Chordata</taxon>
        <taxon>Craniata</taxon>
        <taxon>Vertebrata</taxon>
        <taxon>Euteleostomi</taxon>
        <taxon>Mammalia</taxon>
        <taxon>Eutheria</taxon>
        <taxon>Euarchontoglires</taxon>
        <taxon>Primates</taxon>
        <taxon>Haplorrhini</taxon>
        <taxon>Catarrhini</taxon>
        <taxon>Hominidae</taxon>
        <taxon>Homo</taxon>
    </lineage>
</organism>